<organism>
    <name type="scientific">Homo sapiens</name>
    <name type="common">Human</name>
    <dbReference type="NCBI Taxonomy" id="9606"/>
    <lineage>
        <taxon>Eukaryota</taxon>
        <taxon>Metazoa</taxon>
        <taxon>Chordata</taxon>
        <taxon>Craniata</taxon>
        <taxon>Vertebrata</taxon>
        <taxon>Euteleostomi</taxon>
        <taxon>Mammalia</taxon>
        <taxon>Eutheria</taxon>
        <taxon>Euarchontoglires</taxon>
        <taxon>Primates</taxon>
        <taxon>Haplorrhini</taxon>
        <taxon>Catarrhini</taxon>
        <taxon>Hominidae</taxon>
        <taxon>Homo</taxon>
    </lineage>
</organism>
<name>DYHC1_HUMAN</name>
<reference key="1">
    <citation type="journal article" date="1997" name="DNA Res.">
        <title>Prediction of the coding sequences of unidentified human genes. VII. The complete sequences of 100 new cDNA clones from brain which can code for large proteins in vitro.</title>
        <authorList>
            <person name="Nagase T."/>
            <person name="Ishikawa K."/>
            <person name="Nakajima D."/>
            <person name="Ohira M."/>
            <person name="Seki N."/>
            <person name="Miyajima N."/>
            <person name="Tanaka A."/>
            <person name="Kotani H."/>
            <person name="Nomura N."/>
            <person name="Ohara O."/>
        </authorList>
    </citation>
    <scope>NUCLEOTIDE SEQUENCE [LARGE SCALE MRNA]</scope>
    <scope>VARIANT GLN-4029</scope>
    <source>
        <tissue>Brain</tissue>
    </source>
</reference>
<reference key="2">
    <citation type="submission" date="2005-08" db="EMBL/GenBank/DDBJ databases">
        <authorList>
            <person name="Ohara O."/>
            <person name="Nagase T."/>
            <person name="Kikuno R."/>
            <person name="Yamakawa H."/>
            <person name="Nomura N."/>
        </authorList>
    </citation>
    <scope>SEQUENCE REVISION</scope>
</reference>
<reference key="3">
    <citation type="submission" date="2007-01" db="EMBL/GenBank/DDBJ databases">
        <title>Multiplex amplification and cloning of 5'-ends of cDNA by ligase-free recombination: preparation of full-length cDNA clones encoding motor proteins.</title>
        <authorList>
            <person name="Yamakawa H."/>
            <person name="Kikuno R.F."/>
            <person name="Nagase T."/>
            <person name="Ohara O."/>
        </authorList>
    </citation>
    <scope>NUCLEOTIDE SEQUENCE [LARGE SCALE MRNA]</scope>
    <source>
        <tissue>Brain</tissue>
    </source>
</reference>
<reference key="4">
    <citation type="submission" date="2004-07" db="EMBL/GenBank/DDBJ databases">
        <authorList>
            <consortium name="NIEHS SNPs program"/>
        </authorList>
    </citation>
    <scope>NUCLEOTIDE SEQUENCE [GENOMIC DNA]</scope>
    <scope>VARIANTS ASN-3902 AND GLN-4029</scope>
</reference>
<reference key="5">
    <citation type="journal article" date="1996" name="J. Cell Biol.">
        <title>Mammalian cells express three distinct dynein heavy chains that are localized to different cytoplasmic organelles.</title>
        <authorList>
            <person name="Vaisberg E.A."/>
            <person name="Grissom P.M."/>
            <person name="McIntosh J.R."/>
        </authorList>
    </citation>
    <scope>NUCLEOTIDE SEQUENCE [MRNA] OF 1130-2026</scope>
</reference>
<reference key="6">
    <citation type="journal article" date="1993" name="J. Cell Biol.">
        <title>Cytoplasmic dynein plays a role in mammalian mitotic spindle formation.</title>
        <authorList>
            <person name="Vaisberg E.A."/>
            <person name="Koonce M.P."/>
            <person name="McIntosh J.R."/>
        </authorList>
    </citation>
    <scope>NUCLEOTIDE SEQUENCE [MRNA] OF 1884-2024</scope>
</reference>
<reference key="7">
    <citation type="journal article" date="2004" name="Genome Res.">
        <title>The status, quality, and expansion of the NIH full-length cDNA project: the Mammalian Gene Collection (MGC).</title>
        <authorList>
            <consortium name="The MGC Project Team"/>
        </authorList>
    </citation>
    <scope>NUCLEOTIDE SEQUENCE [LARGE SCALE MRNA] OF 3658-4646</scope>
    <source>
        <tissue>Placenta</tissue>
    </source>
</reference>
<reference key="8">
    <citation type="journal article" date="2003" name="Nature">
        <title>Proteomic characterization of the human centrosome by protein correlation profiling.</title>
        <authorList>
            <person name="Andersen J.S."/>
            <person name="Wilkinson C.J."/>
            <person name="Mayor T."/>
            <person name="Mortensen P."/>
            <person name="Nigg E.A."/>
            <person name="Mann M."/>
        </authorList>
    </citation>
    <scope>IDENTIFICATION BY MASS SPECTROMETRY</scope>
    <source>
        <tissue>Lymphoblast</tissue>
    </source>
</reference>
<reference key="9">
    <citation type="journal article" date="2006" name="Cell">
        <title>Global, in vivo, and site-specific phosphorylation dynamics in signaling networks.</title>
        <authorList>
            <person name="Olsen J.V."/>
            <person name="Blagoev B."/>
            <person name="Gnad F."/>
            <person name="Macek B."/>
            <person name="Kumar C."/>
            <person name="Mortensen P."/>
            <person name="Mann M."/>
        </authorList>
    </citation>
    <scope>IDENTIFICATION BY MASS SPECTROMETRY [LARGE SCALE ANALYSIS]</scope>
    <source>
        <tissue>Cervix carcinoma</tissue>
    </source>
</reference>
<reference key="10">
    <citation type="journal article" date="2008" name="Proc. Natl. Acad. Sci. U.S.A.">
        <title>A quantitative atlas of mitotic phosphorylation.</title>
        <authorList>
            <person name="Dephoure N."/>
            <person name="Zhou C."/>
            <person name="Villen J."/>
            <person name="Beausoleil S.A."/>
            <person name="Bakalarski C.E."/>
            <person name="Elledge S.J."/>
            <person name="Gygi S.P."/>
        </authorList>
    </citation>
    <scope>PHOSPHORYLATION [LARGE SCALE ANALYSIS] AT SER-4368</scope>
    <scope>IDENTIFICATION BY MASS SPECTROMETRY [LARGE SCALE ANALYSIS]</scope>
    <source>
        <tissue>Cervix carcinoma</tissue>
    </source>
</reference>
<reference key="11">
    <citation type="journal article" date="2009" name="Sci. Signal.">
        <title>Quantitative phosphoproteomic analysis of T cell receptor signaling reveals system-wide modulation of protein-protein interactions.</title>
        <authorList>
            <person name="Mayya V."/>
            <person name="Lundgren D.H."/>
            <person name="Hwang S.-I."/>
            <person name="Rezaul K."/>
            <person name="Wu L."/>
            <person name="Eng J.K."/>
            <person name="Rodionov V."/>
            <person name="Han D.K."/>
        </authorList>
    </citation>
    <scope>IDENTIFICATION BY MASS SPECTROMETRY [LARGE SCALE ANALYSIS]</scope>
    <source>
        <tissue>Leukemic T-cell</tissue>
    </source>
</reference>
<reference key="12">
    <citation type="journal article" date="2009" name="Science">
        <title>Lysine acetylation targets protein complexes and co-regulates major cellular functions.</title>
        <authorList>
            <person name="Choudhary C."/>
            <person name="Kumar C."/>
            <person name="Gnad F."/>
            <person name="Nielsen M.L."/>
            <person name="Rehman M."/>
            <person name="Walther T.C."/>
            <person name="Olsen J.V."/>
            <person name="Mann M."/>
        </authorList>
    </citation>
    <scope>ACETYLATION [LARGE SCALE ANALYSIS] AT LYS-1125; LYS-3480 AND LYS-4283</scope>
    <scope>IDENTIFICATION BY MASS SPECTROMETRY [LARGE SCALE ANALYSIS]</scope>
</reference>
<reference key="13">
    <citation type="journal article" date="2010" name="Sci. Signal.">
        <title>Quantitative phosphoproteomics reveals widespread full phosphorylation site occupancy during mitosis.</title>
        <authorList>
            <person name="Olsen J.V."/>
            <person name="Vermeulen M."/>
            <person name="Santamaria A."/>
            <person name="Kumar C."/>
            <person name="Miller M.L."/>
            <person name="Jensen L.J."/>
            <person name="Gnad F."/>
            <person name="Cox J."/>
            <person name="Jensen T.S."/>
            <person name="Nigg E.A."/>
            <person name="Brunak S."/>
            <person name="Mann M."/>
        </authorList>
    </citation>
    <scope>IDENTIFICATION BY MASS SPECTROMETRY [LARGE SCALE ANALYSIS]</scope>
    <source>
        <tissue>Cervix carcinoma</tissue>
    </source>
</reference>
<reference key="14">
    <citation type="journal article" date="2011" name="BMC Syst. Biol.">
        <title>Initial characterization of the human central proteome.</title>
        <authorList>
            <person name="Burkard T.R."/>
            <person name="Planyavsky M."/>
            <person name="Kaupe I."/>
            <person name="Breitwieser F.P."/>
            <person name="Buerckstuemmer T."/>
            <person name="Bennett K.L."/>
            <person name="Superti-Furga G."/>
            <person name="Colinge J."/>
        </authorList>
    </citation>
    <scope>IDENTIFICATION BY MASS SPECTROMETRY [LARGE SCALE ANALYSIS]</scope>
</reference>
<reference key="15">
    <citation type="journal article" date="2012" name="Mol. Cell. Proteomics">
        <title>Comparative large-scale characterisation of plant vs. mammal proteins reveals similar and idiosyncratic N-alpha acetylation features.</title>
        <authorList>
            <person name="Bienvenut W.V."/>
            <person name="Sumpton D."/>
            <person name="Martinez A."/>
            <person name="Lilla S."/>
            <person name="Espagne C."/>
            <person name="Meinnel T."/>
            <person name="Giglione C."/>
        </authorList>
    </citation>
    <scope>ACETYLATION [LARGE SCALE ANALYSIS] AT SER-2</scope>
    <scope>CLEAVAGE OF INITIATOR METHIONINE [LARGE SCALE ANALYSIS]</scope>
    <scope>IDENTIFICATION BY MASS SPECTROMETRY [LARGE SCALE ANALYSIS]</scope>
</reference>
<reference key="16">
    <citation type="journal article" date="2013" name="J. Proteome Res.">
        <title>Toward a comprehensive characterization of a human cancer cell phosphoproteome.</title>
        <authorList>
            <person name="Zhou H."/>
            <person name="Di Palma S."/>
            <person name="Preisinger C."/>
            <person name="Peng M."/>
            <person name="Polat A.N."/>
            <person name="Heck A.J."/>
            <person name="Mohammed S."/>
        </authorList>
    </citation>
    <scope>PHOSPHORYLATION [LARGE SCALE ANALYSIS] AT SER-70; SER-4162; THR-4366 AND SER-4368</scope>
    <scope>IDENTIFICATION BY MASS SPECTROMETRY [LARGE SCALE ANALYSIS]</scope>
    <source>
        <tissue>Cervix carcinoma</tissue>
        <tissue>Erythroleukemia</tissue>
    </source>
</reference>
<reference key="17">
    <citation type="journal article" date="2014" name="J. Proteomics">
        <title>An enzyme assisted RP-RPLC approach for in-depth analysis of human liver phosphoproteome.</title>
        <authorList>
            <person name="Bian Y."/>
            <person name="Song C."/>
            <person name="Cheng K."/>
            <person name="Dong M."/>
            <person name="Wang F."/>
            <person name="Huang J."/>
            <person name="Sun D."/>
            <person name="Wang L."/>
            <person name="Ye M."/>
            <person name="Zou H."/>
        </authorList>
    </citation>
    <scope>IDENTIFICATION BY MASS SPECTROMETRY [LARGE SCALE ANALYSIS]</scope>
    <source>
        <tissue>Liver</tissue>
    </source>
</reference>
<reference key="18">
    <citation type="journal article" date="2015" name="Proteomics">
        <title>N-terminome analysis of the human mitochondrial proteome.</title>
        <authorList>
            <person name="Vaca Jacome A.S."/>
            <person name="Rabilloud T."/>
            <person name="Schaeffer-Reiss C."/>
            <person name="Rompais M."/>
            <person name="Ayoub D."/>
            <person name="Lane L."/>
            <person name="Bairoch A."/>
            <person name="Van Dorsselaer A."/>
            <person name="Carapito C."/>
        </authorList>
    </citation>
    <scope>IDENTIFICATION BY MASS SPECTROMETRY [LARGE SCALE ANALYSIS]</scope>
</reference>
<reference key="19">
    <citation type="journal article" date="2016" name="J. Biol. Chem.">
        <title>Nuclear mitotic apparatus (NuMA) interacts with and regulates astrin at the mitotic spindle.</title>
        <authorList>
            <person name="Chu X."/>
            <person name="Chen X."/>
            <person name="Wan Q."/>
            <person name="Zheng Z."/>
            <person name="Du Q."/>
        </authorList>
    </citation>
    <scope>FUNCTION</scope>
</reference>
<reference key="20">
    <citation type="journal article" date="2019" name="J. Cell Biol.">
        <title>Rab46 integrates Ca2+ and histamine signaling to regulate selective cargo release from Weibel-Palade bodies.</title>
        <authorList>
            <person name="Miteva K.T."/>
            <person name="Pedicini L."/>
            <person name="Wilson L.A."/>
            <person name="Jayasinghe I."/>
            <person name="Slip R.G."/>
            <person name="Marszalek K."/>
            <person name="Gaunt H.J."/>
            <person name="Bartoli F."/>
            <person name="Deivasigamani S."/>
            <person name="Sobradillo D."/>
            <person name="Beech D.J."/>
            <person name="McKeown L."/>
        </authorList>
    </citation>
    <scope>INTERACTION WITH CRACR2A</scope>
</reference>
<reference evidence="27 28 29 30 31 32 33" key="21">
    <citation type="journal article" date="2018" name="Nature">
        <title>Cryo-EM shows how dynactin recruits two dyneins for faster movement.</title>
        <authorList>
            <person name="Urnavicius L."/>
            <person name="Lau C.K."/>
            <person name="Elshenawy M.M."/>
            <person name="Morales-Rios E."/>
            <person name="Motz C."/>
            <person name="Yildiz A."/>
            <person name="Carter A.P."/>
        </authorList>
    </citation>
    <scope>X-RAY CRYSTALLOGRAPHY (1.79 ANGSTROMS) OF 1-201</scope>
    <scope>SUBUNIT</scope>
</reference>
<reference evidence="34 35 36 37 38 39 40" key="22">
    <citation type="journal article" date="2022" name="Nature">
        <title>Structure of dynein-dynactin on microtubules shows tandem adaptor binding.</title>
        <authorList>
            <person name="Chaaban S."/>
            <person name="Carter A.P."/>
        </authorList>
    </citation>
    <scope>STRUCTURE BY ELECTRON MICROSCOPY (3.30 ANGSTROMS)</scope>
    <scope>SUBUNIT</scope>
</reference>
<reference key="23">
    <citation type="journal article" date="2010" name="Nat. Genet.">
        <title>A de novo paradigm for mental retardation.</title>
        <authorList>
            <person name="Vissers L.E."/>
            <person name="de Ligt J."/>
            <person name="Gilissen C."/>
            <person name="Janssen I."/>
            <person name="Steehouwer M."/>
            <person name="de Vries P."/>
            <person name="van Lier B."/>
            <person name="Arts P."/>
            <person name="Wieskamp N."/>
            <person name="del Rosario M."/>
            <person name="van Bon B.W."/>
            <person name="Hoischen A."/>
            <person name="de Vries B.B."/>
            <person name="Brunner H.G."/>
            <person name="Veltman J.A."/>
        </authorList>
    </citation>
    <scope>VARIANT CDCBM13 PRO-3822</scope>
</reference>
<reference key="24">
    <citation type="journal article" date="2011" name="Am. J. Hum. Genet.">
        <title>Exome sequencing identifies a DYNC1H1 mutation in a large pedigree with dominant axonal Charcot-Marie-Tooth disease.</title>
        <authorList>
            <person name="Weedon M.N."/>
            <person name="Hastings R."/>
            <person name="Caswell R."/>
            <person name="Xie W."/>
            <person name="Paszkiewicz K."/>
            <person name="Antoniadi T."/>
            <person name="Williams M."/>
            <person name="King C."/>
            <person name="Greenhalgh L."/>
            <person name="Newbury-Ecob R."/>
            <person name="Ellard S."/>
        </authorList>
    </citation>
    <scope>VARIANT CMT2O ARG-306</scope>
</reference>
<reference key="25">
    <citation type="journal article" date="2012" name="J. Med. Genet.">
        <title>Mutations in DYNC1H1 cause severe intellectual disability with neuronal migration defects.</title>
        <authorList>
            <person name="Willemsen M.H."/>
            <person name="Vissers L.E."/>
            <person name="Willemsen M.A."/>
            <person name="van Bon B.W."/>
            <person name="Kroes T."/>
            <person name="de Ligt J."/>
            <person name="de Vries B.B."/>
            <person name="Schoots J."/>
            <person name="Lugtenberg D."/>
            <person name="Hamel B.C."/>
            <person name="van Bokhoven H."/>
            <person name="Brunner H.G."/>
            <person name="Veltman J.A."/>
            <person name="Kleefstra T."/>
        </authorList>
    </citation>
    <scope>VARIANT CDCBM13 LYS-1518</scope>
</reference>
<reference key="26">
    <citation type="journal article" date="2012" name="Neurogenetics">
        <title>A DYNC1H1 mutation causes a dominant spinal muscular atrophy with lower extremity predominance.</title>
        <authorList>
            <person name="Tsurusaki Y."/>
            <person name="Saitoh S."/>
            <person name="Tomizawa K."/>
            <person name="Sudo A."/>
            <person name="Asahina N."/>
            <person name="Shiraishi H."/>
            <person name="Ito J.I."/>
            <person name="Tanaka H."/>
            <person name="Doi H."/>
            <person name="Saitsu H."/>
            <person name="Miyake N."/>
            <person name="Matsumoto N."/>
        </authorList>
    </citation>
    <scope>VARIANT SMALED1 ARG-306</scope>
</reference>
<reference key="27">
    <citation type="journal article" date="2012" name="Neurology">
        <title>Mutations in the tail domain of DYNC1H1 cause dominant spinal muscular atrophy.</title>
        <authorList>
            <person name="Harms M.B."/>
            <person name="Ori-McKenney K.M."/>
            <person name="Scoto M."/>
            <person name="Tuck E.P."/>
            <person name="Bell S."/>
            <person name="Ma D."/>
            <person name="Masi S."/>
            <person name="Allred P."/>
            <person name="Al-Lozi M."/>
            <person name="Reilly M.M."/>
            <person name="Miller L.J."/>
            <person name="Jani-Acsadi A."/>
            <person name="Pestronk A."/>
            <person name="Shy M.E."/>
            <person name="Muntoni F."/>
            <person name="Vallee R.B."/>
            <person name="Baloh R.H."/>
        </authorList>
    </citation>
    <scope>VARIANTS SMALED1 LEU-584; GLU-671 AND CYS-970</scope>
    <scope>CHARACTERIZATION OF VARIANT SMALED1 LEU-584</scope>
</reference>
<reference key="28">
    <citation type="journal article" date="2012" name="N. Engl. J. Med.">
        <title>Diagnostic exome sequencing in persons with severe intellectual disability.</title>
        <authorList>
            <person name="de Ligt J."/>
            <person name="Willemsen M.H."/>
            <person name="van Bon B.W."/>
            <person name="Kleefstra T."/>
            <person name="Yntema H.G."/>
            <person name="Kroes T."/>
            <person name="Vulto-van Silfhout A.T."/>
            <person name="Koolen D.A."/>
            <person name="de Vries P."/>
            <person name="Gilissen C."/>
            <person name="del Rosario M."/>
            <person name="Hoischen A."/>
            <person name="Scheffer H."/>
            <person name="de Vries B.B."/>
            <person name="Brunner H.G."/>
            <person name="Veltman J.A."/>
            <person name="Vissers L.E."/>
        </authorList>
    </citation>
    <scope>VARIANT CDCBM13 LYS-1518</scope>
    <scope>VARIANTS ALA-142; LEU-1250; MET-2247; CYS-4143; SER-4285; THR-4421; SER-4507 AND GLY-4603</scope>
</reference>
<reference key="29">
    <citation type="journal article" date="2013" name="Nat. Genet.">
        <title>Mutations in TUBG1, DYNC1H1, KIF5C and KIF2A cause malformations of cortical development and microcephaly.</title>
        <authorList>
            <person name="Poirier K."/>
            <person name="Lebrun N."/>
            <person name="Broix L."/>
            <person name="Tian G."/>
            <person name="Saillour Y."/>
            <person name="Boscheron C."/>
            <person name="Parrini E."/>
            <person name="Valence S."/>
            <person name="Pierre B.S."/>
            <person name="Oger M."/>
            <person name="Lacombe D."/>
            <person name="Genevieve D."/>
            <person name="Fontana E."/>
            <person name="Darra F."/>
            <person name="Cances C."/>
            <person name="Barth M."/>
            <person name="Bonneau D."/>
            <person name="Bernadina B.D."/>
            <person name="N'guyen S."/>
            <person name="Gitiaux C."/>
            <person name="Parent P."/>
            <person name="des Portes V."/>
            <person name="Pedespan J.M."/>
            <person name="Legrez V."/>
            <person name="Castelnau-Ptakine L."/>
            <person name="Nitschke P."/>
            <person name="Hieu T."/>
            <person name="Masson C."/>
            <person name="Zelenika D."/>
            <person name="Andrieux A."/>
            <person name="Francis F."/>
            <person name="Guerrini R."/>
            <person name="Cowan N.J."/>
            <person name="Bahi-Buisson N."/>
            <person name="Chelly J."/>
        </authorList>
    </citation>
    <scope>VARIANTS CDCBM13 ILE-129; 659-THR--MET-662 DEL; GLN-1567; CYS-1962; THR-3241; ASN-3336; GLN-3344 AND GLN-3384</scope>
    <scope>CHARACTERIZATION OF VARIANTS CDCBM13 ASN-3336 AND GLN-3384</scope>
</reference>
<reference key="30">
    <citation type="journal article" date="2015" name="Hum. Mutat.">
        <title>Novel mutations in the DYNC1H1 tail domain refine the genetic and clinical spectrum of dyneinopathies.</title>
        <authorList>
            <person name="Peeters K."/>
            <person name="Bervoets S."/>
            <person name="Chamova T."/>
            <person name="Litvinenko I."/>
            <person name="De Vriendt E."/>
            <person name="Bichev S."/>
            <person name="Kancheva D."/>
            <person name="Mitev V."/>
            <person name="Kennerson M."/>
            <person name="Timmerman V."/>
            <person name="De Jonghe P."/>
            <person name="Tournev I."/>
            <person name="MacMillan J."/>
            <person name="Jordanova A."/>
        </authorList>
    </citation>
    <scope>VARIANT LYS-94</scope>
    <scope>VARIANT SMALED1 LEU-264</scope>
    <scope>VARIANT CMT2O CYS-598</scope>
    <scope>CHARACTERIZATION OF VARIANT SMALED1 LEU-264</scope>
    <scope>CHARACTERIZATION OF VARIANT CMT2O CYS-598</scope>
    <scope>INTERACTION WITH BICD2</scope>
</reference>
<reference key="31">
    <citation type="journal article" date="2014" name="Hum. Mutat.">
        <title>Novel dynein DYNC1H1 neck and motor domain mutations link distal spinal muscular atrophy and abnormal cortical development.</title>
        <authorList>
            <person name="Fiorillo C."/>
            <person name="Moro F."/>
            <person name="Yi J."/>
            <person name="Weil S."/>
            <person name="Brisca G."/>
            <person name="Astrea G."/>
            <person name="Severino M."/>
            <person name="Romano A."/>
            <person name="Battini R."/>
            <person name="Rossi A."/>
            <person name="Minetti C."/>
            <person name="Bruno C."/>
            <person name="Santorelli F.M."/>
            <person name="Vallee R."/>
        </authorList>
    </citation>
    <scope>VARIANTS CMT2O ARG-1194 AND LYS-3048</scope>
    <scope>CHARACTERIZATION OF VARIANTS CMT2O ARG-1194 AND LYS-3048</scope>
</reference>
<reference key="32">
    <citation type="journal article" date="2015" name="Pediatr. Neurol.">
        <title>Exome Sequencing Identifies DYNC1H1 Variant Associated With Vertebral Abnormality and Spinal Muscular Atrophy With Lower Extremity Predominance.</title>
        <authorList>
            <person name="Punetha J."/>
            <person name="Monges S."/>
            <person name="Franchi M.E."/>
            <person name="Hoffman E.P."/>
            <person name="Cirak S."/>
            <person name="Tesi-Rocha C."/>
        </authorList>
    </citation>
    <scope>VARIANT SMALED1 CYS-598</scope>
</reference>
<reference key="33">
    <citation type="journal article" date="2016" name="Sci. Rep.">
        <title>Identification of a de novo DYNC1H1 mutation via WES according to published guidelines.</title>
        <authorList>
            <person name="Ding D."/>
            <person name="Chen Z."/>
            <person name="Li K."/>
            <person name="Long Z."/>
            <person name="Ye W."/>
            <person name="Tang Z."/>
            <person name="Xia K."/>
            <person name="Qiu R."/>
            <person name="Tang B."/>
            <person name="Jiang H."/>
        </authorList>
    </citation>
    <scope>VARIANT SMALED1 LEU-776</scope>
</reference>
<reference key="34">
    <citation type="journal article" date="2017" name="J. Child Neurol.">
        <title>Exome Sequencing Identifies De Novo DYNC1H1 Mutations Associated With Distal Spinal Muscular Atrophy and Malformations of Cortical Development.</title>
        <authorList>
            <person name="Chen Y."/>
            <person name="Xu Y."/>
            <person name="Li G."/>
            <person name="Li N."/>
            <person name="Yu T."/>
            <person name="Yao R.E."/>
            <person name="Wang X."/>
            <person name="Shen Y."/>
            <person name="Wang J."/>
        </authorList>
    </citation>
    <scope>VARIANT SMALED1 GLU-1132</scope>
    <scope>VARIANT CDCBM13 GLN-3384</scope>
</reference>
<proteinExistence type="evidence at protein level"/>
<protein>
    <recommendedName>
        <fullName>Cytoplasmic dynein 1 heavy chain 1</fullName>
    </recommendedName>
    <alternativeName>
        <fullName>Cytoplasmic dynein heavy chain 1</fullName>
    </alternativeName>
    <alternativeName>
        <fullName>Dynein heavy chain, cytosolic</fullName>
    </alternativeName>
</protein>
<dbReference type="EMBL" id="AB002323">
    <property type="protein sequence ID" value="BAA20783.3"/>
    <property type="status" value="ALT_INIT"/>
    <property type="molecule type" value="mRNA"/>
</dbReference>
<dbReference type="EMBL" id="AB290157">
    <property type="protein sequence ID" value="BAG06711.1"/>
    <property type="molecule type" value="mRNA"/>
</dbReference>
<dbReference type="EMBL" id="AY682080">
    <property type="protein sequence ID" value="AAT74625.1"/>
    <property type="molecule type" value="Genomic_DNA"/>
</dbReference>
<dbReference type="EMBL" id="U53530">
    <property type="protein sequence ID" value="AAB09727.1"/>
    <property type="molecule type" value="mRNA"/>
</dbReference>
<dbReference type="EMBL" id="L23958">
    <property type="protein sequence ID" value="AAA16065.1"/>
    <property type="molecule type" value="mRNA"/>
</dbReference>
<dbReference type="EMBL" id="BC021297">
    <property type="protein sequence ID" value="AAH21297.2"/>
    <property type="molecule type" value="mRNA"/>
</dbReference>
<dbReference type="CCDS" id="CCDS9966.1"/>
<dbReference type="PIR" id="A49019">
    <property type="entry name" value="A49019"/>
</dbReference>
<dbReference type="PIR" id="G02529">
    <property type="entry name" value="G02529"/>
</dbReference>
<dbReference type="RefSeq" id="NP_001367.2">
    <property type="nucleotide sequence ID" value="NM_001376.4"/>
</dbReference>
<dbReference type="PDB" id="5NUG">
    <property type="method" value="EM"/>
    <property type="resolution" value="3.80 A"/>
    <property type="chains" value="A/B=1-4646"/>
</dbReference>
<dbReference type="PDB" id="5OWO">
    <property type="method" value="X-ray"/>
    <property type="resolution" value="1.79 A"/>
    <property type="chains" value="A/B/C/D=1-201"/>
</dbReference>
<dbReference type="PDB" id="6F1T">
    <property type="method" value="EM"/>
    <property type="resolution" value="3.50 A"/>
    <property type="chains" value="e/f/m/n=1-1053"/>
</dbReference>
<dbReference type="PDB" id="6F1U">
    <property type="method" value="EM"/>
    <property type="resolution" value="3.40 A"/>
    <property type="chains" value="f/m/n=1-1186"/>
</dbReference>
<dbReference type="PDB" id="6F1V">
    <property type="method" value="EM"/>
    <property type="resolution" value="3.40 A"/>
    <property type="chains" value="f/m=1-1186"/>
</dbReference>
<dbReference type="PDB" id="6F1Y">
    <property type="method" value="EM"/>
    <property type="resolution" value="3.40 A"/>
    <property type="chains" value="f=780-927"/>
</dbReference>
<dbReference type="PDB" id="6F38">
    <property type="method" value="EM"/>
    <property type="resolution" value="6.70 A"/>
    <property type="chains" value="e/f/m/n=1-1455"/>
</dbReference>
<dbReference type="PDB" id="6F3A">
    <property type="method" value="EM"/>
    <property type="resolution" value="8.20 A"/>
    <property type="chains" value="e/f=1-1455"/>
</dbReference>
<dbReference type="PDB" id="7Z8F">
    <property type="method" value="EM"/>
    <property type="resolution" value="20.00 A"/>
    <property type="chains" value="e/f/m/n=1-4646"/>
</dbReference>
<dbReference type="PDB" id="7Z8G">
    <property type="method" value="EM"/>
    <property type="resolution" value="3.52 A"/>
    <property type="chains" value="A=1-4646"/>
</dbReference>
<dbReference type="PDB" id="7Z8H">
    <property type="method" value="EM"/>
    <property type="resolution" value="3.41 A"/>
    <property type="chains" value="A=1-4646"/>
</dbReference>
<dbReference type="PDB" id="7Z8I">
    <property type="method" value="EM"/>
    <property type="resolution" value="3.30 A"/>
    <property type="chains" value="f/m/n=1-4646"/>
</dbReference>
<dbReference type="PDB" id="7Z8J">
    <property type="method" value="EM"/>
    <property type="resolution" value="3.93 A"/>
    <property type="chains" value="f/m/n=1-4646"/>
</dbReference>
<dbReference type="PDB" id="7Z8K">
    <property type="method" value="EM"/>
    <property type="resolution" value="4.37 A"/>
    <property type="chains" value="e/f=1-4646"/>
</dbReference>
<dbReference type="PDB" id="7Z8L">
    <property type="method" value="EM"/>
    <property type="resolution" value="4.90 A"/>
    <property type="chains" value="f=1-4646"/>
</dbReference>
<dbReference type="PDB" id="8DYU">
    <property type="method" value="EM"/>
    <property type="resolution" value="4.00 A"/>
    <property type="chains" value="A=1320-4646"/>
</dbReference>
<dbReference type="PDB" id="8DYV">
    <property type="method" value="EM"/>
    <property type="resolution" value="3.97 A"/>
    <property type="chains" value="A=1320-4646"/>
</dbReference>
<dbReference type="PDB" id="8FCY">
    <property type="method" value="EM"/>
    <property type="resolution" value="3.40 A"/>
    <property type="chains" value="A=1458-3277, A=3412-4646"/>
</dbReference>
<dbReference type="PDB" id="8FD6">
    <property type="method" value="EM"/>
    <property type="resolution" value="2.90 A"/>
    <property type="chains" value="A=1458-3277, A=3412-4646"/>
</dbReference>
<dbReference type="PDB" id="8FDT">
    <property type="method" value="EM"/>
    <property type="resolution" value="3.20 A"/>
    <property type="chains" value="A=1458-3277, A=3412-4646"/>
</dbReference>
<dbReference type="PDB" id="8FDU">
    <property type="method" value="EM"/>
    <property type="resolution" value="3.30 A"/>
    <property type="chains" value="A=1458-3277, A=3412-4646"/>
</dbReference>
<dbReference type="PDB" id="8PQV">
    <property type="method" value="EM"/>
    <property type="resolution" value="4.00 A"/>
    <property type="chains" value="A=1-4646"/>
</dbReference>
<dbReference type="PDB" id="8PQW">
    <property type="method" value="EM"/>
    <property type="resolution" value="4.20 A"/>
    <property type="chains" value="A=1-4646"/>
</dbReference>
<dbReference type="PDB" id="8PQY">
    <property type="method" value="EM"/>
    <property type="resolution" value="3.80 A"/>
    <property type="chains" value="A=1-4646"/>
</dbReference>
<dbReference type="PDB" id="8PQZ">
    <property type="method" value="EM"/>
    <property type="resolution" value="5.50 A"/>
    <property type="chains" value="A/J=1-4646"/>
</dbReference>
<dbReference type="PDB" id="8PR0">
    <property type="method" value="EM"/>
    <property type="resolution" value="9.40 A"/>
    <property type="chains" value="A/B=1-4646"/>
</dbReference>
<dbReference type="PDB" id="8PR1">
    <property type="method" value="EM"/>
    <property type="resolution" value="8.20 A"/>
    <property type="chains" value="A/G=1-4646"/>
</dbReference>
<dbReference type="PDB" id="8PR2">
    <property type="method" value="EM"/>
    <property type="resolution" value="3.80 A"/>
    <property type="chains" value="f/m=1-4646"/>
</dbReference>
<dbReference type="PDB" id="8PR3">
    <property type="method" value="EM"/>
    <property type="resolution" value="3.90 A"/>
    <property type="chains" value="f/m=1-4646"/>
</dbReference>
<dbReference type="PDB" id="8PTK">
    <property type="method" value="EM"/>
    <property type="resolution" value="10.00 A"/>
    <property type="chains" value="e/f/m/n=1-4646"/>
</dbReference>
<dbReference type="PDBsum" id="5NUG"/>
<dbReference type="PDBsum" id="5OWO"/>
<dbReference type="PDBsum" id="6F1T"/>
<dbReference type="PDBsum" id="6F1U"/>
<dbReference type="PDBsum" id="6F1V"/>
<dbReference type="PDBsum" id="6F1Y"/>
<dbReference type="PDBsum" id="6F38"/>
<dbReference type="PDBsum" id="6F3A"/>
<dbReference type="PDBsum" id="7Z8F"/>
<dbReference type="PDBsum" id="7Z8G"/>
<dbReference type="PDBsum" id="7Z8H"/>
<dbReference type="PDBsum" id="7Z8I"/>
<dbReference type="PDBsum" id="7Z8J"/>
<dbReference type="PDBsum" id="7Z8K"/>
<dbReference type="PDBsum" id="7Z8L"/>
<dbReference type="PDBsum" id="8DYU"/>
<dbReference type="PDBsum" id="8DYV"/>
<dbReference type="PDBsum" id="8FCY"/>
<dbReference type="PDBsum" id="8FD6"/>
<dbReference type="PDBsum" id="8FDT"/>
<dbReference type="PDBsum" id="8FDU"/>
<dbReference type="PDBsum" id="8PQV"/>
<dbReference type="PDBsum" id="8PQW"/>
<dbReference type="PDBsum" id="8PQY"/>
<dbReference type="PDBsum" id="8PQZ"/>
<dbReference type="PDBsum" id="8PR0"/>
<dbReference type="PDBsum" id="8PR1"/>
<dbReference type="PDBsum" id="8PR2"/>
<dbReference type="PDBsum" id="8PR3"/>
<dbReference type="PDBsum" id="8PTK"/>
<dbReference type="BMRB" id="Q14204"/>
<dbReference type="EMDB" id="EMD-14549"/>
<dbReference type="EMDB" id="EMD-14550"/>
<dbReference type="EMDB" id="EMD-14551"/>
<dbReference type="EMDB" id="EMD-14552"/>
<dbReference type="EMDB" id="EMD-14553"/>
<dbReference type="EMDB" id="EMD-14555"/>
<dbReference type="EMDB" id="EMD-14556"/>
<dbReference type="EMDB" id="EMD-17825"/>
<dbReference type="EMDB" id="EMD-17826"/>
<dbReference type="EMDB" id="EMD-17828"/>
<dbReference type="EMDB" id="EMD-17829"/>
<dbReference type="EMDB" id="EMD-17830"/>
<dbReference type="EMDB" id="EMD-17831"/>
<dbReference type="EMDB" id="EMD-17832"/>
<dbReference type="EMDB" id="EMD-17833"/>
<dbReference type="EMDB" id="EMD-17873"/>
<dbReference type="EMDB" id="EMD-27782"/>
<dbReference type="EMDB" id="EMD-27783"/>
<dbReference type="EMDB" id="EMD-28999"/>
<dbReference type="EMDB" id="EMD-29003"/>
<dbReference type="EMDB" id="EMD-29012"/>
<dbReference type="EMDB" id="EMD-29014"/>
<dbReference type="EMDB" id="EMD-3698"/>
<dbReference type="EMDB" id="EMD-4168"/>
<dbReference type="EMDB" id="EMD-4169"/>
<dbReference type="EMDB" id="EMD-4170"/>
<dbReference type="EMDB" id="EMD-4171"/>
<dbReference type="EMDB" id="EMD-4177"/>
<dbReference type="SMR" id="Q14204"/>
<dbReference type="BioGRID" id="108117">
    <property type="interactions" value="515"/>
</dbReference>
<dbReference type="ComplexPortal" id="CPX-5025">
    <property type="entry name" value="Cytoplasmic dynein complex, variant 1"/>
</dbReference>
<dbReference type="CORUM" id="Q14204"/>
<dbReference type="DIP" id="DIP-37544N"/>
<dbReference type="FunCoup" id="Q14204">
    <property type="interactions" value="2461"/>
</dbReference>
<dbReference type="IntAct" id="Q14204">
    <property type="interactions" value="232"/>
</dbReference>
<dbReference type="MINT" id="Q14204"/>
<dbReference type="STRING" id="9606.ENSP00000348965"/>
<dbReference type="CarbonylDB" id="Q14204"/>
<dbReference type="GlyCosmos" id="Q14204">
    <property type="glycosylation" value="5 sites, 2 glycans"/>
</dbReference>
<dbReference type="GlyGen" id="Q14204">
    <property type="glycosylation" value="8 sites, 2 O-linked glycans (7 sites)"/>
</dbReference>
<dbReference type="iPTMnet" id="Q14204"/>
<dbReference type="MetOSite" id="Q14204"/>
<dbReference type="PhosphoSitePlus" id="Q14204"/>
<dbReference type="SwissPalm" id="Q14204"/>
<dbReference type="BioMuta" id="DYNC1H1"/>
<dbReference type="DMDM" id="57015308"/>
<dbReference type="jPOST" id="Q14204"/>
<dbReference type="MassIVE" id="Q14204"/>
<dbReference type="PaxDb" id="9606-ENSP00000348965"/>
<dbReference type="PeptideAtlas" id="Q14204"/>
<dbReference type="PRIDE" id="Q14204"/>
<dbReference type="ProteomicsDB" id="59927"/>
<dbReference type="Pumba" id="Q14204"/>
<dbReference type="Antibodypedia" id="122">
    <property type="antibodies" value="150 antibodies from 28 providers"/>
</dbReference>
<dbReference type="DNASU" id="1778"/>
<dbReference type="Ensembl" id="ENST00000360184.10">
    <property type="protein sequence ID" value="ENSP00000348965.4"/>
    <property type="gene ID" value="ENSG00000197102.14"/>
</dbReference>
<dbReference type="GeneID" id="1778"/>
<dbReference type="KEGG" id="hsa:1778"/>
<dbReference type="MANE-Select" id="ENST00000360184.10">
    <property type="protein sequence ID" value="ENSP00000348965.4"/>
    <property type="RefSeq nucleotide sequence ID" value="NM_001376.5"/>
    <property type="RefSeq protein sequence ID" value="NP_001367.2"/>
</dbReference>
<dbReference type="UCSC" id="uc001yks.3">
    <property type="organism name" value="human"/>
</dbReference>
<dbReference type="AGR" id="HGNC:2961"/>
<dbReference type="CTD" id="1778"/>
<dbReference type="DisGeNET" id="1778"/>
<dbReference type="GeneCards" id="DYNC1H1"/>
<dbReference type="GeneReviews" id="DYNC1H1"/>
<dbReference type="HGNC" id="HGNC:2961">
    <property type="gene designation" value="DYNC1H1"/>
</dbReference>
<dbReference type="HPA" id="ENSG00000197102">
    <property type="expression patterns" value="Low tissue specificity"/>
</dbReference>
<dbReference type="MalaCards" id="DYNC1H1"/>
<dbReference type="MIM" id="158600">
    <property type="type" value="phenotype"/>
</dbReference>
<dbReference type="MIM" id="600112">
    <property type="type" value="gene"/>
</dbReference>
<dbReference type="MIM" id="614228">
    <property type="type" value="phenotype"/>
</dbReference>
<dbReference type="MIM" id="614563">
    <property type="type" value="phenotype"/>
</dbReference>
<dbReference type="neXtProt" id="NX_Q14204"/>
<dbReference type="OpenTargets" id="ENSG00000197102"/>
<dbReference type="Orphanet" id="284232">
    <property type="disease" value="Autosomal dominant Charcot-Marie-Tooth disease type 2O"/>
</dbReference>
<dbReference type="Orphanet" id="178469">
    <property type="disease" value="Autosomal dominant non-syndromic intellectual disability"/>
</dbReference>
<dbReference type="Orphanet" id="209341">
    <property type="disease" value="DYNC1H1-related autosomal dominant childhood-onset proximal spinal muscular atrophy"/>
</dbReference>
<dbReference type="PharmGKB" id="PA27432"/>
<dbReference type="VEuPathDB" id="HostDB:ENSG00000197102"/>
<dbReference type="eggNOG" id="KOG3595">
    <property type="taxonomic scope" value="Eukaryota"/>
</dbReference>
<dbReference type="GeneTree" id="ENSGT00940000156103"/>
<dbReference type="HOGENOM" id="CLU_000038_7_0_1"/>
<dbReference type="InParanoid" id="Q14204"/>
<dbReference type="OMA" id="NERQMTR"/>
<dbReference type="OrthoDB" id="14187at2759"/>
<dbReference type="PAN-GO" id="Q14204">
    <property type="GO annotations" value="11 GO annotations based on evolutionary models"/>
</dbReference>
<dbReference type="PhylomeDB" id="Q14204"/>
<dbReference type="TreeFam" id="TF101165"/>
<dbReference type="PathwayCommons" id="Q14204"/>
<dbReference type="Reactome" id="R-HSA-141444">
    <property type="pathway name" value="Amplification of signal from unattached kinetochores via a MAD2 inhibitory signal"/>
</dbReference>
<dbReference type="Reactome" id="R-HSA-2132295">
    <property type="pathway name" value="MHC class II antigen presentation"/>
</dbReference>
<dbReference type="Reactome" id="R-HSA-2467813">
    <property type="pathway name" value="Separation of Sister Chromatids"/>
</dbReference>
<dbReference type="Reactome" id="R-HSA-2500257">
    <property type="pathway name" value="Resolution of Sister Chromatid Cohesion"/>
</dbReference>
<dbReference type="Reactome" id="R-HSA-2565942">
    <property type="pathway name" value="Regulation of PLK1 Activity at G2/M Transition"/>
</dbReference>
<dbReference type="Reactome" id="R-HSA-3371497">
    <property type="pathway name" value="HSP90 chaperone cycle for steroid hormone receptors (SHR) in the presence of ligand"/>
</dbReference>
<dbReference type="Reactome" id="R-HSA-380259">
    <property type="pathway name" value="Loss of Nlp from mitotic centrosomes"/>
</dbReference>
<dbReference type="Reactome" id="R-HSA-380270">
    <property type="pathway name" value="Recruitment of mitotic centrosome proteins and complexes"/>
</dbReference>
<dbReference type="Reactome" id="R-HSA-380284">
    <property type="pathway name" value="Loss of proteins required for interphase microtubule organization from the centrosome"/>
</dbReference>
<dbReference type="Reactome" id="R-HSA-380320">
    <property type="pathway name" value="Recruitment of NuMA to mitotic centrosomes"/>
</dbReference>
<dbReference type="Reactome" id="R-HSA-5620912">
    <property type="pathway name" value="Anchoring of the basal body to the plasma membrane"/>
</dbReference>
<dbReference type="Reactome" id="R-HSA-5663220">
    <property type="pathway name" value="RHO GTPases Activate Formins"/>
</dbReference>
<dbReference type="Reactome" id="R-HSA-6798695">
    <property type="pathway name" value="Neutrophil degranulation"/>
</dbReference>
<dbReference type="Reactome" id="R-HSA-6807878">
    <property type="pathway name" value="COPI-mediated anterograde transport"/>
</dbReference>
<dbReference type="Reactome" id="R-HSA-6811436">
    <property type="pathway name" value="COPI-independent Golgi-to-ER retrograde traffic"/>
</dbReference>
<dbReference type="Reactome" id="R-HSA-68877">
    <property type="pathway name" value="Mitotic Prometaphase"/>
</dbReference>
<dbReference type="Reactome" id="R-HSA-8854518">
    <property type="pathway name" value="AURKA Activation by TPX2"/>
</dbReference>
<dbReference type="Reactome" id="R-HSA-9609690">
    <property type="pathway name" value="HCMV Early Events"/>
</dbReference>
<dbReference type="Reactome" id="R-HSA-9646399">
    <property type="pathway name" value="Aggrephagy"/>
</dbReference>
<dbReference type="Reactome" id="R-HSA-9648025">
    <property type="pathway name" value="EML4 and NUDC in mitotic spindle formation"/>
</dbReference>
<dbReference type="SignaLink" id="Q14204"/>
<dbReference type="SIGNOR" id="Q14204"/>
<dbReference type="BioGRID-ORCS" id="1778">
    <property type="hits" value="817 hits in 1172 CRISPR screens"/>
</dbReference>
<dbReference type="CD-CODE" id="8C2F96ED">
    <property type="entry name" value="Centrosome"/>
</dbReference>
<dbReference type="CD-CODE" id="91857CE7">
    <property type="entry name" value="Nucleolus"/>
</dbReference>
<dbReference type="CD-CODE" id="DEE660B4">
    <property type="entry name" value="Stress granule"/>
</dbReference>
<dbReference type="CD-CODE" id="FB4E32DD">
    <property type="entry name" value="Presynaptic clusters and postsynaptic densities"/>
</dbReference>
<dbReference type="ChiTaRS" id="DYNC1H1">
    <property type="organism name" value="human"/>
</dbReference>
<dbReference type="GeneWiki" id="DYNC1H1"/>
<dbReference type="GenomeRNAi" id="1778"/>
<dbReference type="Pharos" id="Q14204">
    <property type="development level" value="Tbio"/>
</dbReference>
<dbReference type="PRO" id="PR:Q14204"/>
<dbReference type="Proteomes" id="UP000005640">
    <property type="component" value="Chromosome 14"/>
</dbReference>
<dbReference type="RNAct" id="Q14204">
    <property type="molecule type" value="protein"/>
</dbReference>
<dbReference type="Bgee" id="ENSG00000197102">
    <property type="expression patterns" value="Expressed in cortical plate and 203 other cell types or tissues"/>
</dbReference>
<dbReference type="ExpressionAtlas" id="Q14204">
    <property type="expression patterns" value="baseline and differential"/>
</dbReference>
<dbReference type="GO" id="GO:1904115">
    <property type="term" value="C:axon cytoplasm"/>
    <property type="evidence" value="ECO:0007669"/>
    <property type="project" value="GOC"/>
</dbReference>
<dbReference type="GO" id="GO:0035578">
    <property type="term" value="C:azurophil granule lumen"/>
    <property type="evidence" value="ECO:0000304"/>
    <property type="project" value="Reactome"/>
</dbReference>
<dbReference type="GO" id="GO:0005938">
    <property type="term" value="C:cell cortex"/>
    <property type="evidence" value="ECO:0000318"/>
    <property type="project" value="GO_Central"/>
</dbReference>
<dbReference type="GO" id="GO:0005813">
    <property type="term" value="C:centrosome"/>
    <property type="evidence" value="ECO:0000314"/>
    <property type="project" value="UniProtKB"/>
</dbReference>
<dbReference type="GO" id="GO:0005868">
    <property type="term" value="C:cytoplasmic dynein complex"/>
    <property type="evidence" value="ECO:0000314"/>
    <property type="project" value="GO_Central"/>
</dbReference>
<dbReference type="GO" id="GO:0005881">
    <property type="term" value="C:cytoplasmic microtubule"/>
    <property type="evidence" value="ECO:0000318"/>
    <property type="project" value="GO_Central"/>
</dbReference>
<dbReference type="GO" id="GO:0005829">
    <property type="term" value="C:cytosol"/>
    <property type="evidence" value="ECO:0000304"/>
    <property type="project" value="Reactome"/>
</dbReference>
<dbReference type="GO" id="GO:0030286">
    <property type="term" value="C:dynein complex"/>
    <property type="evidence" value="ECO:0000353"/>
    <property type="project" value="ComplexPortal"/>
</dbReference>
<dbReference type="GO" id="GO:0070062">
    <property type="term" value="C:extracellular exosome"/>
    <property type="evidence" value="ECO:0007005"/>
    <property type="project" value="UniProtKB"/>
</dbReference>
<dbReference type="GO" id="GO:0005576">
    <property type="term" value="C:extracellular region"/>
    <property type="evidence" value="ECO:0000304"/>
    <property type="project" value="Reactome"/>
</dbReference>
<dbReference type="GO" id="GO:0030175">
    <property type="term" value="C:filopodium"/>
    <property type="evidence" value="ECO:0007669"/>
    <property type="project" value="Ensembl"/>
</dbReference>
<dbReference type="GO" id="GO:0016020">
    <property type="term" value="C:membrane"/>
    <property type="evidence" value="ECO:0007005"/>
    <property type="project" value="UniProtKB"/>
</dbReference>
<dbReference type="GO" id="GO:0005874">
    <property type="term" value="C:microtubule"/>
    <property type="evidence" value="ECO:0000314"/>
    <property type="project" value="UniProtKB"/>
</dbReference>
<dbReference type="GO" id="GO:0005524">
    <property type="term" value="F:ATP binding"/>
    <property type="evidence" value="ECO:0007669"/>
    <property type="project" value="UniProtKB-KW"/>
</dbReference>
<dbReference type="GO" id="GO:0016887">
    <property type="term" value="F:ATP hydrolysis activity"/>
    <property type="evidence" value="ECO:0007669"/>
    <property type="project" value="InterPro"/>
</dbReference>
<dbReference type="GO" id="GO:0045505">
    <property type="term" value="F:dynein intermediate chain binding"/>
    <property type="evidence" value="ECO:0000318"/>
    <property type="project" value="GO_Central"/>
</dbReference>
<dbReference type="GO" id="GO:0051959">
    <property type="term" value="F:dynein light intermediate chain binding"/>
    <property type="evidence" value="ECO:0000353"/>
    <property type="project" value="FlyBase"/>
</dbReference>
<dbReference type="GO" id="GO:0042802">
    <property type="term" value="F:identical protein binding"/>
    <property type="evidence" value="ECO:0000314"/>
    <property type="project" value="UniProtKB"/>
</dbReference>
<dbReference type="GO" id="GO:0008569">
    <property type="term" value="F:minus-end-directed microtubule motor activity"/>
    <property type="evidence" value="ECO:0007669"/>
    <property type="project" value="InterPro"/>
</dbReference>
<dbReference type="GO" id="GO:0003723">
    <property type="term" value="F:RNA binding"/>
    <property type="evidence" value="ECO:0007005"/>
    <property type="project" value="UniProtKB"/>
</dbReference>
<dbReference type="GO" id="GO:0051301">
    <property type="term" value="P:cell division"/>
    <property type="evidence" value="ECO:0007669"/>
    <property type="project" value="UniProtKB-KW"/>
</dbReference>
<dbReference type="GO" id="GO:0031122">
    <property type="term" value="P:cytoplasmic microtubule organization"/>
    <property type="evidence" value="ECO:0000318"/>
    <property type="project" value="GO_Central"/>
</dbReference>
<dbReference type="GO" id="GO:0051293">
    <property type="term" value="P:establishment of spindle localization"/>
    <property type="evidence" value="ECO:0000315"/>
    <property type="project" value="CACAO"/>
</dbReference>
<dbReference type="GO" id="GO:0007052">
    <property type="term" value="P:mitotic spindle organization"/>
    <property type="evidence" value="ECO:0000318"/>
    <property type="project" value="GO_Central"/>
</dbReference>
<dbReference type="GO" id="GO:0007097">
    <property type="term" value="P:nuclear migration"/>
    <property type="evidence" value="ECO:0000318"/>
    <property type="project" value="GO_Central"/>
</dbReference>
<dbReference type="GO" id="GO:0033962">
    <property type="term" value="P:P-body assembly"/>
    <property type="evidence" value="ECO:0000250"/>
    <property type="project" value="BHF-UCL"/>
</dbReference>
<dbReference type="GO" id="GO:0120162">
    <property type="term" value="P:positive regulation of cold-induced thermogenesis"/>
    <property type="evidence" value="ECO:0000250"/>
    <property type="project" value="YuBioLab"/>
</dbReference>
<dbReference type="GO" id="GO:0032388">
    <property type="term" value="P:positive regulation of intracellular transport"/>
    <property type="evidence" value="ECO:0000315"/>
    <property type="project" value="UniProtKB"/>
</dbReference>
<dbReference type="GO" id="GO:1905832">
    <property type="term" value="P:positive regulation of spindle assembly"/>
    <property type="evidence" value="ECO:0000315"/>
    <property type="project" value="UniProtKB"/>
</dbReference>
<dbReference type="GO" id="GO:0090235">
    <property type="term" value="P:regulation of metaphase plate congression"/>
    <property type="evidence" value="ECO:0000315"/>
    <property type="project" value="UniProtKB"/>
</dbReference>
<dbReference type="GO" id="GO:0060236">
    <property type="term" value="P:regulation of mitotic spindle organization"/>
    <property type="evidence" value="ECO:0000315"/>
    <property type="project" value="UniProtKB"/>
</dbReference>
<dbReference type="GO" id="GO:0008090">
    <property type="term" value="P:retrograde axonal transport"/>
    <property type="evidence" value="ECO:0000318"/>
    <property type="project" value="GO_Central"/>
</dbReference>
<dbReference type="GO" id="GO:0034063">
    <property type="term" value="P:stress granule assembly"/>
    <property type="evidence" value="ECO:0000250"/>
    <property type="project" value="BHF-UCL"/>
</dbReference>
<dbReference type="CDD" id="cd00009">
    <property type="entry name" value="AAA"/>
    <property type="match status" value="2"/>
</dbReference>
<dbReference type="FunFam" id="1.20.920.20:FF:000002">
    <property type="entry name" value="Cytoplasmic dynein 1 heavy chain"/>
    <property type="match status" value="1"/>
</dbReference>
<dbReference type="FunFam" id="3.40.50.300:FF:000122">
    <property type="entry name" value="Cytoplasmic dynein 1 heavy chain"/>
    <property type="match status" value="1"/>
</dbReference>
<dbReference type="FunFam" id="1.20.920.60:FF:000001">
    <property type="entry name" value="Cytoplasmic dynein 1 heavy chain 1"/>
    <property type="match status" value="1"/>
</dbReference>
<dbReference type="FunFam" id="1.10.8.1220:FF:000002">
    <property type="entry name" value="cytoplasmic dynein 1 heavy chain 1-like"/>
    <property type="match status" value="1"/>
</dbReference>
<dbReference type="FunFam" id="1.10.287.2620:FF:000001">
    <property type="entry name" value="Cytoplasmic dynein heavy chain 1"/>
    <property type="match status" value="1"/>
</dbReference>
<dbReference type="FunFam" id="1.10.472.130:FF:000002">
    <property type="entry name" value="Cytoplasmic dynein heavy chain 1"/>
    <property type="match status" value="1"/>
</dbReference>
<dbReference type="FunFam" id="1.10.8.710:FF:000005">
    <property type="entry name" value="Cytoplasmic dynein heavy chain 1"/>
    <property type="match status" value="1"/>
</dbReference>
<dbReference type="FunFam" id="1.20.140.100:FF:000002">
    <property type="entry name" value="Cytoplasmic dynein heavy chain 1"/>
    <property type="match status" value="1"/>
</dbReference>
<dbReference type="FunFam" id="1.20.58.1120:FF:000003">
    <property type="entry name" value="Cytoplasmic dynein heavy chain 1"/>
    <property type="match status" value="1"/>
</dbReference>
<dbReference type="FunFam" id="1.20.920.30:FF:000001">
    <property type="entry name" value="Cytoplasmic dynein heavy chain 1"/>
    <property type="match status" value="1"/>
</dbReference>
<dbReference type="FunFam" id="3.20.180.20:FF:000002">
    <property type="entry name" value="Cytoplasmic dynein heavy chain 1"/>
    <property type="match status" value="1"/>
</dbReference>
<dbReference type="FunFam" id="3.40.50.300:FF:000071">
    <property type="entry name" value="Cytoplasmic dynein heavy chain 1"/>
    <property type="match status" value="1"/>
</dbReference>
<dbReference type="FunFam" id="3.40.50.300:FF:000517">
    <property type="entry name" value="Cytoplasmic dynein heavy chain 1"/>
    <property type="match status" value="1"/>
</dbReference>
<dbReference type="FunFam" id="1.10.8.720:FF:000003">
    <property type="entry name" value="Cytoplasmic dynein heavy chain 2"/>
    <property type="match status" value="1"/>
</dbReference>
<dbReference type="FunFam" id="1.20.1270.280:FF:000004">
    <property type="entry name" value="Cytoplasmic dynein heavy chain 2"/>
    <property type="match status" value="1"/>
</dbReference>
<dbReference type="FunFam" id="3.10.490.20:FF:000004">
    <property type="entry name" value="Cytoplasmic dynein heavy chain 2"/>
    <property type="match status" value="1"/>
</dbReference>
<dbReference type="FunFam" id="3.40.50.300:FF:000373">
    <property type="entry name" value="Cytoplasmic dynein heavy chain 2"/>
    <property type="match status" value="1"/>
</dbReference>
<dbReference type="FunFam" id="3.40.50.300:FF:001956">
    <property type="entry name" value="Dynein cytoplasmic 1 heavy chain 1"/>
    <property type="match status" value="1"/>
</dbReference>
<dbReference type="FunFam" id="3.40.50.300:FF:002655">
    <property type="entry name" value="Dynein cytoplasmic 1 heavy chain 1"/>
    <property type="match status" value="1"/>
</dbReference>
<dbReference type="Gene3D" id="1.10.287.2620">
    <property type="match status" value="1"/>
</dbReference>
<dbReference type="Gene3D" id="1.10.472.130">
    <property type="match status" value="1"/>
</dbReference>
<dbReference type="Gene3D" id="1.10.8.1220">
    <property type="match status" value="1"/>
</dbReference>
<dbReference type="Gene3D" id="1.10.8.710">
    <property type="match status" value="1"/>
</dbReference>
<dbReference type="Gene3D" id="1.20.1270.280">
    <property type="match status" value="1"/>
</dbReference>
<dbReference type="Gene3D" id="1.20.58.1120">
    <property type="match status" value="1"/>
</dbReference>
<dbReference type="Gene3D" id="1.20.920.20">
    <property type="match status" value="2"/>
</dbReference>
<dbReference type="Gene3D" id="1.20.920.30">
    <property type="match status" value="1"/>
</dbReference>
<dbReference type="Gene3D" id="1.20.920.60">
    <property type="match status" value="1"/>
</dbReference>
<dbReference type="Gene3D" id="3.10.490.20">
    <property type="match status" value="1"/>
</dbReference>
<dbReference type="Gene3D" id="6.10.140.1060">
    <property type="match status" value="1"/>
</dbReference>
<dbReference type="Gene3D" id="1.20.140.100">
    <property type="entry name" value="Dynein heavy chain, N-terminal domain 2"/>
    <property type="match status" value="1"/>
</dbReference>
<dbReference type="Gene3D" id="3.20.180.20">
    <property type="entry name" value="Dynein heavy chain, N-terminal domain 2"/>
    <property type="match status" value="1"/>
</dbReference>
<dbReference type="Gene3D" id="3.40.50.300">
    <property type="entry name" value="P-loop containing nucleotide triphosphate hydrolases"/>
    <property type="match status" value="5"/>
</dbReference>
<dbReference type="Gene3D" id="1.10.8.720">
    <property type="entry name" value="Region D6 of dynein motor"/>
    <property type="match status" value="1"/>
</dbReference>
<dbReference type="InterPro" id="IPR003593">
    <property type="entry name" value="AAA+_ATPase"/>
</dbReference>
<dbReference type="InterPro" id="IPR035699">
    <property type="entry name" value="AAA_6"/>
</dbReference>
<dbReference type="InterPro" id="IPR035706">
    <property type="entry name" value="AAA_9"/>
</dbReference>
<dbReference type="InterPro" id="IPR041658">
    <property type="entry name" value="AAA_lid_11"/>
</dbReference>
<dbReference type="InterPro" id="IPR042219">
    <property type="entry name" value="AAA_lid_11_sf"/>
</dbReference>
<dbReference type="InterPro" id="IPR026983">
    <property type="entry name" value="DHC"/>
</dbReference>
<dbReference type="InterPro" id="IPR054354">
    <property type="entry name" value="DYNC2H1-like_lid"/>
</dbReference>
<dbReference type="InterPro" id="IPR042222">
    <property type="entry name" value="Dynein_2_N"/>
</dbReference>
<dbReference type="InterPro" id="IPR043157">
    <property type="entry name" value="Dynein_AAA1S"/>
</dbReference>
<dbReference type="InterPro" id="IPR041466">
    <property type="entry name" value="Dynein_AAA5_ext"/>
</dbReference>
<dbReference type="InterPro" id="IPR041228">
    <property type="entry name" value="Dynein_C"/>
</dbReference>
<dbReference type="InterPro" id="IPR043160">
    <property type="entry name" value="Dynein_C_barrel"/>
</dbReference>
<dbReference type="InterPro" id="IPR024743">
    <property type="entry name" value="Dynein_HC_stalk"/>
</dbReference>
<dbReference type="InterPro" id="IPR024317">
    <property type="entry name" value="Dynein_heavy_chain_D4_dom"/>
</dbReference>
<dbReference type="InterPro" id="IPR004273">
    <property type="entry name" value="Dynein_heavy_D6_P-loop"/>
</dbReference>
<dbReference type="InterPro" id="IPR013602">
    <property type="entry name" value="Dynein_heavy_linker"/>
</dbReference>
<dbReference type="InterPro" id="IPR013594">
    <property type="entry name" value="Dynein_heavy_tail"/>
</dbReference>
<dbReference type="InterPro" id="IPR042228">
    <property type="entry name" value="Dynein_linker_3"/>
</dbReference>
<dbReference type="InterPro" id="IPR027417">
    <property type="entry name" value="P-loop_NTPase"/>
</dbReference>
<dbReference type="PANTHER" id="PTHR46532:SF13">
    <property type="entry name" value="CYTOPLASMIC DYNEIN 1 HEAVY CHAIN 1"/>
    <property type="match status" value="1"/>
</dbReference>
<dbReference type="PANTHER" id="PTHR46532">
    <property type="entry name" value="MALE FERTILITY FACTOR KL5"/>
    <property type="match status" value="1"/>
</dbReference>
<dbReference type="Pfam" id="PF12774">
    <property type="entry name" value="AAA_6"/>
    <property type="match status" value="1"/>
</dbReference>
<dbReference type="Pfam" id="PF12775">
    <property type="entry name" value="AAA_7"/>
    <property type="match status" value="1"/>
</dbReference>
<dbReference type="Pfam" id="PF12780">
    <property type="entry name" value="AAA_8"/>
    <property type="match status" value="1"/>
</dbReference>
<dbReference type="Pfam" id="PF12781">
    <property type="entry name" value="AAA_9"/>
    <property type="match status" value="1"/>
</dbReference>
<dbReference type="Pfam" id="PF18198">
    <property type="entry name" value="AAA_lid_11"/>
    <property type="match status" value="1"/>
</dbReference>
<dbReference type="Pfam" id="PF08385">
    <property type="entry name" value="DHC_N1"/>
    <property type="match status" value="1"/>
</dbReference>
<dbReference type="Pfam" id="PF08393">
    <property type="entry name" value="DHC_N2"/>
    <property type="match status" value="1"/>
</dbReference>
<dbReference type="Pfam" id="PF22597">
    <property type="entry name" value="DYN_lid"/>
    <property type="match status" value="1"/>
</dbReference>
<dbReference type="Pfam" id="PF17852">
    <property type="entry name" value="Dynein_AAA_lid"/>
    <property type="match status" value="1"/>
</dbReference>
<dbReference type="Pfam" id="PF18199">
    <property type="entry name" value="Dynein_C"/>
    <property type="match status" value="1"/>
</dbReference>
<dbReference type="Pfam" id="PF03028">
    <property type="entry name" value="Dynein_heavy"/>
    <property type="match status" value="1"/>
</dbReference>
<dbReference type="Pfam" id="PF12777">
    <property type="entry name" value="MT"/>
    <property type="match status" value="1"/>
</dbReference>
<dbReference type="SMART" id="SM00382">
    <property type="entry name" value="AAA"/>
    <property type="match status" value="4"/>
</dbReference>
<dbReference type="SUPFAM" id="SSF52540">
    <property type="entry name" value="P-loop containing nucleoside triphosphate hydrolases"/>
    <property type="match status" value="4"/>
</dbReference>
<sequence length="4646" mass="532408">MSEPGGGGGEDGSAGLEVSAVQNVADVSVLQKHLRKLVPLLLEDGGEAPAALEAALEEKSALEQMRKFLSDPQVHTVLVERSTLKEDVGDEGEEEKEFISYNINIDIHYGVKSNSLAFIKRTPVIDADKPVSSQLRVLTLSEDSPYETLHSFISNAVAPFFKSYIRESGKADRDGDKMAPSVEKKIAELEMGLLHLQQNIEIPEISLPIHPMITNVAKQCYERGEKPKVTDFGDKVEDPTFLNQLQSGVNRWIREIQKVTKLDRDPASGTALQEISFWLNLERALYRIQEKRESPEVLLTLDILKHGKRFHATVSFDTDTGLKQALETVNDYNPLMKDFPLNDLLSATELDKIRQALVAIFTHLRKIRNTKYPIQRALRLVEAISRDLSSQLLKVLGTRKLMHVAYEEFEKVMVACFEVFQTWDDEYEKLQVLLRDIVKRKREENLKMVWRINPAHRKLQARLDQMRKFRRQHEQLRAVIVRVLRPQVTAVAQQNQGEVPEPQDMKVAEVLFDAADANAIEEVNLAYENVKEVDGLDVSKEGTEAWEAAMKRYDERIDRVETRITARLRDQLGTAKNANEMFRIFSRFNALFVRPHIRGAIREYQTQLIQRVKDDIESLHDKFKVQYPQSQACKMSHVRDLPPVSGSIIWAKQIDRQLTAYMKRVEDVLGKGWENHVEGQKLKQDGDSFRMKLNTQEIFDDWARKVQQRNLGVSGRIFTIESTRVRGRTGNVLKLKVNFLPEIITLSKEVRNLKWLGFRVPLAIVNKAHQANQLYPFAISLIESVRTYERTCEKVEERNTISLLVAGLKKEVQALIAEGIALVWESYKLDPYVQRLAETVFNFQEKVDDLLIIEEKIDLEVRSLETCMYDHKTFSEILNRVQKAVDDLNLHSYSNLPIWVNKLDMEIERILGVRLQAGLRAWTQVLLGQAEDKAEVDMDTDAPQVSHKPGGEPKIKNVVHELRITNQVIYLNPPIEECRYKLYQEMFAWKMVVLSLPRIQSQRYQVGVHYELTEEEKFYRNALTRMPDGPVALEESYSAVMGIVSEVEQYVKVWLQYQCLWDMQAENIYNRLGEDLNKWQALLVQIRKARGTFDNAETKKEFGPVVIDYGKVQSKVNLKYDSWHKEVLSKFGQMLGSNMTEFHSQISKSRQELEQHSVDTASTSDAVTFITYVQSLKRKIKQFEKQVELYRNGQRLLEKQRFQFPPSWLYIDNIEGEWGAFNDIMRRKDSAIQQQVANLQMKIVQEDRAVESRTTDLLTDWEKTKPVTGNLRPEEALQALTIYEGKFGRLKDDREKCAKAKEALELTDTGLLSGSEERVQVALEELQDLKGVWSELSKVWEQIDQMKEQPWVSVQPRKLRQNLDALLNQLKSFPARLRQYASYEFVQRLLKGYMKINMLVIELKSEALKDRHWKQLMKRLHVNWVVSELTLGQIWDVDLQKNEAIVKDVLLVAQGEMALEEFLKQIREVWNTYELDLVNYQNKCRLIRGWDDLFNKVKEHINSVSAMKLSPYYKVFEEDALSWEDKLNRIMALFDVWIDVQRRWVYLEGIFTGSADIKHLLPVETQRFQSISTEFLALMKKVSKSPLVMDVLNIQGVQRSLERLADLLGKIQKALGEYLERERSSFPRFYFVGDEDLLEIIGNSKNVAKLQKHFKKMFAGVSSIILNEDNSVVLGISSREGEEVMFKTPVSITEHPKINEWLTLVEKEMRVTLAKLLAESVTEVEIFGKATSIDPNTYITWIDKYQAQLVVLSAQIAWSENVETALSSMGGGGDAAPLHSVLSNVEVTLNVLADSVLMEQPPLRRRKLEHLITELVHQRDVTRSLIKSKIDNAKSFEWLSQMRFYFDPKQTDVLQQLSIQMANAKFNYGFEYLGVQDKLVQTPLTDRCYLTMTQALEARLGGSPFGPAGTGKTESVKALGHQLGRFVLVFNCDETFDFQAMGRIFVGLCQVGAWGCFDEFNRLEERMLSAVSQQVQCIQEALREHSNPNYDKTSAPITCELLNKQVKVSPDMAIFITMNPGYAGRSNLPDNLKKLFRSLAMTKPDRQLIAQVMLYSQGFRTAEVLANKIVPFFKLCDEQLSSQSHYDFGLRALKSVLVSAGNVKRERIQKIKREKEERGEAVDEGEIAENLPEQEILIQSVCETMVPKLVAEDIPLLFSLLSDVFPGVQYHRGEMTALREELKKVCQEMYLTYGDGEEVGGMWVEKVLQLYQITQINHGLMMVGPSGSGKSMAWRVLLKALERLEGVEGVAHIIDPKAISKDHLYGTLDPNTREWTDGLFTHVLRKIIDSVRGELQKRQWIVFDGDVDPEWVENLNSVLDDNKLLTLPNGERLSLPPNVRIMFEVQDLKYATLATVSRCGMVWFSEDVLSTDMIFNNFLARLRSIPLDEGEDEAQRRRKGKEDEGEEAASPMLQIQRDAATIMQPYFTSNGLVTKALEHAFQLEHIMDLTRLRCLGSLFSMLHQACRNVAQYNANHPDFPMQIEQLERYIQRYLVYAILWSLSGDSRLKMRAELGEYIRRITTVPLPTAPNIPIIDYEVSISGEWSPWQAKVPQIEVETHKVAAPDVVVPTLDTVRHEALLYTWLAEHKPLVLCGPPGSGKTMTLFSALRALPDMEVVGLNFSSATTPELLLKTFDHYCEYRRTPNGVVLAPVQLGKWLVLFCDEINLPDMDKYGTQRVISFIRQMVEHGGFYRTSDQTWVKLERIQFVGACNPPTDPGRKPLSHRFLRHVPVVYVDYPGPASLTQIYGTFNRAMLRLIPSLRTYAEPLTAAMVEFYTMSQERFTQDTQPHYIYSPREMTRWVRGIFEALRPLETLPVEGLIRIWAHEALRLFQDRLVEDEERRWTDENIDTVALKHFPNIDREKAMSRPILYSNWLSKDYIPVDQEELRDYVKARLKVFYEEELDVPLVLFNEVLDHVLRIDRIFRQPQGHLLLIGVSGAGKTTLSRFVAWMNGLSVYQIKVHRKYTGEDFDEDLRTVLRRSGCKNEKIAFIMDESNVLDSGFLERMNTLLANGEVPGLFEGDEYATLMTQCKEGAQKEGLMLDSHEELYKWFTSQVIRNLHVVFTMNPSSEGLKDRAATSPALFNRCVLNWFGDWSTEALYQVGKEFTSKMDLEKPNYIVPDYMPVVYDKLPQPPSHREAIVNSCVFVHQTLHQANARLAKRGGRTMAITPRHYLDFINHYANLFHEKRSELEEQQMHLNVGLRKIKETVDQVEELRRDLRIKSQELEVKNAAANDKLKKMVKDQQEAEKKKVMSQEIQEQLHKQQEVIADKQMSVKEDLDKVEPAVIEAQNAVKSIKKQHLVEVRSMANPPAAVKLALESICLLLGESTTDWKQIRSIIMRENFIPTIVNFSAEEISDAIREKMKKNYMSNPSYNYEIVNRASLACGPMVKWAIAQLNYADMLKRVEPLRNELQKLEDDAKDNQQKANEVEQMIRDLEASIARYKEEYAVLISEAQAIKADLAAVEAKVNRSTALLKSLSAERERWEKTSETFKNQMSTIAGDCLLSAAFIAYAGYFDQQMRQNLFTTWSHHLQQANIQFRTDIARTEYLSNADERLRWQASSLPADDLCTENAIMLKRFNRYPLIIDPSGQATEFIMNEYKDRKITRTSFLDDAFRKNLESALRFGNPLLVQDVESYDPVLNPVLNREVRRTGGRVLITLGDQDIDLSPSFVIFLSTRDPTVEFPPDLCSRVTFVNFTVTRSSLQSQCLNEVLKAERPDVDEKRSDLLKLQGEFQLRLRQLEKSLLQALNEVKGRILDDDTIITTLENLKREAAEVTRKVEETDIVMQEVETVSQQYLPLSTACSSIYFTMESLKQIHFLYQYSLQFFLDIYHNVLYENPNLKGVTDHTQRLSIITKDLFQVAFNRVARGMLHQDHITFAMLLARIKLKGTVGEPTYDAEFQHFLRGNEIVLSAGSTPRIQGLTVEQAEAVVRLSCLPAFKDLIAKVQADEQFGIWLDSSSPEQTVPYLWSEETPATPIGQAIHRLLLIQAFRPDRLLAMAHMFVSTNLGESFMSIMEQPLDLTHIVGTEVKPNTPVLMCSVPGYDASGHVEDLAAEQNTQITSIAIGSAEGFNQADKAINTAVKSGRWVMLKNVHLAPGWLMQLEKKLHSLQPHACFRLFLTMEINPKVPVNLLRAGRIFVFEPPPGVKANMLRTFSSIPVSRICKSPNERARLYFLLAWFHAIIQERLRYAPLGWSKKYEFGESDLRSACDTVDTWLDDTAKGRQNISPDKIPWSALKTLMAQSIYGGRVDNEFDQRLLNTFLERLFTTRSFDSEFKLACKVDGHKDIQMPDGIRREEFVQWVELLPDTQTPSWLGLPNNAERVLLTTQGVDMISKMLKMQMLEDEDDLAYAETEKKTRTDSTSDGRPAWMRTLHTTASNWLHLIPQTLSHLKRTVENIKDPLFRFFEREVKMGAKLLQDVRQDLADVVQVCEGKKKQTNYLRTLINELVKGILPRSWSHYTVPAGMTVIQWVSDFSERIKQLQNISLAAASGGAKELKNIHVCLGGLFVPEAYITATRQYVAQANSWSLEELCLEVNVTTSQGATLDACSFGVTGLKLQGATCNNNKLSLSNAISTALPLTQLRWVKQTNTEKKASVVTLPVYLNFTRADLIFTVDFEIATKEDPRSFYERGVAVLCTE</sequence>
<keyword id="KW-0002">3D-structure</keyword>
<keyword id="KW-0007">Acetylation</keyword>
<keyword id="KW-0067">ATP-binding</keyword>
<keyword id="KW-0131">Cell cycle</keyword>
<keyword id="KW-0132">Cell division</keyword>
<keyword id="KW-0144">Charcot-Marie-Tooth disease</keyword>
<keyword id="KW-0175">Coiled coil</keyword>
<keyword id="KW-0963">Cytoplasm</keyword>
<keyword id="KW-0206">Cytoskeleton</keyword>
<keyword id="KW-0225">Disease variant</keyword>
<keyword id="KW-0243">Dynein</keyword>
<keyword id="KW-0991">Intellectual disability</keyword>
<keyword id="KW-0493">Microtubule</keyword>
<keyword id="KW-0498">Mitosis</keyword>
<keyword id="KW-0505">Motor protein</keyword>
<keyword id="KW-0523">Neurodegeneration</keyword>
<keyword id="KW-0622">Neuropathy</keyword>
<keyword id="KW-0547">Nucleotide-binding</keyword>
<keyword id="KW-0597">Phosphoprotein</keyword>
<keyword id="KW-1267">Proteomics identification</keyword>
<keyword id="KW-1185">Reference proteome</keyword>
<keyword id="KW-0677">Repeat</keyword>
<keyword id="KW-0813">Transport</keyword>
<gene>
    <name evidence="26" type="primary">DYNC1H1</name>
    <name type="synonym">DHC1</name>
    <name type="synonym">DNCH1</name>
    <name type="synonym">DNCL</name>
    <name type="synonym">DNECL</name>
    <name type="synonym">DYHC</name>
    <name type="synonym">KIAA0325</name>
</gene>
<accession>Q14204</accession>
<accession>B0I1R0</accession>
<accession>Q6DKQ7</accession>
<accession>Q8WU28</accession>
<accession>Q92814</accession>
<accession>Q9Y4G5</accession>
<evidence type="ECO:0000250" key="1"/>
<evidence type="ECO:0000250" key="2">
    <source>
        <dbReference type="UniProtKB" id="P38650"/>
    </source>
</evidence>
<evidence type="ECO:0000250" key="3">
    <source>
        <dbReference type="UniProtKB" id="Q9JHU4"/>
    </source>
</evidence>
<evidence type="ECO:0000255" key="4"/>
<evidence type="ECO:0000256" key="5">
    <source>
        <dbReference type="SAM" id="MobiDB-lite"/>
    </source>
</evidence>
<evidence type="ECO:0000269" key="6">
    <source>
    </source>
</evidence>
<evidence type="ECO:0000269" key="7">
    <source>
    </source>
</evidence>
<evidence type="ECO:0000269" key="8">
    <source>
    </source>
</evidence>
<evidence type="ECO:0000269" key="9">
    <source>
    </source>
</evidence>
<evidence type="ECO:0000269" key="10">
    <source>
    </source>
</evidence>
<evidence type="ECO:0000269" key="11">
    <source>
    </source>
</evidence>
<evidence type="ECO:0000269" key="12">
    <source>
    </source>
</evidence>
<evidence type="ECO:0000269" key="13">
    <source>
    </source>
</evidence>
<evidence type="ECO:0000269" key="14">
    <source>
    </source>
</evidence>
<evidence type="ECO:0000269" key="15">
    <source>
    </source>
</evidence>
<evidence type="ECO:0000269" key="16">
    <source>
    </source>
</evidence>
<evidence type="ECO:0000269" key="17">
    <source>
    </source>
</evidence>
<evidence type="ECO:0000269" key="18">
    <source>
    </source>
</evidence>
<evidence type="ECO:0000269" key="19">
    <source>
    </source>
</evidence>
<evidence type="ECO:0000269" key="20">
    <source>
    </source>
</evidence>
<evidence type="ECO:0000269" key="21">
    <source>
    </source>
</evidence>
<evidence type="ECO:0000269" key="22">
    <source>
    </source>
</evidence>
<evidence type="ECO:0000269" key="23">
    <source ref="4"/>
</evidence>
<evidence type="ECO:0000305" key="24"/>
<evidence type="ECO:0000305" key="25">
    <source>
    </source>
</evidence>
<evidence type="ECO:0000312" key="26">
    <source>
        <dbReference type="HGNC" id="HGNC:2961"/>
    </source>
</evidence>
<evidence type="ECO:0007744" key="27">
    <source>
        <dbReference type="PDB" id="5OWO"/>
    </source>
</evidence>
<evidence type="ECO:0007744" key="28">
    <source>
        <dbReference type="PDB" id="6F1T"/>
    </source>
</evidence>
<evidence type="ECO:0007744" key="29">
    <source>
        <dbReference type="PDB" id="6F1U"/>
    </source>
</evidence>
<evidence type="ECO:0007744" key="30">
    <source>
        <dbReference type="PDB" id="6F1V"/>
    </source>
</evidence>
<evidence type="ECO:0007744" key="31">
    <source>
        <dbReference type="PDB" id="6F1Y"/>
    </source>
</evidence>
<evidence type="ECO:0007744" key="32">
    <source>
        <dbReference type="PDB" id="6F38"/>
    </source>
</evidence>
<evidence type="ECO:0007744" key="33">
    <source>
        <dbReference type="PDB" id="6F3A"/>
    </source>
</evidence>
<evidence type="ECO:0007744" key="34">
    <source>
        <dbReference type="PDB" id="7Z8F"/>
    </source>
</evidence>
<evidence type="ECO:0007744" key="35">
    <source>
        <dbReference type="PDB" id="7Z8G"/>
    </source>
</evidence>
<evidence type="ECO:0007744" key="36">
    <source>
        <dbReference type="PDB" id="7Z8H"/>
    </source>
</evidence>
<evidence type="ECO:0007744" key="37">
    <source>
        <dbReference type="PDB" id="7Z8I"/>
    </source>
</evidence>
<evidence type="ECO:0007744" key="38">
    <source>
        <dbReference type="PDB" id="7Z8J"/>
    </source>
</evidence>
<evidence type="ECO:0007744" key="39">
    <source>
        <dbReference type="PDB" id="7Z8K"/>
    </source>
</evidence>
<evidence type="ECO:0007744" key="40">
    <source>
        <dbReference type="PDB" id="7Z8L"/>
    </source>
</evidence>
<evidence type="ECO:0007744" key="41">
    <source>
    </source>
</evidence>
<evidence type="ECO:0007744" key="42">
    <source>
    </source>
</evidence>
<evidence type="ECO:0007744" key="43">
    <source>
    </source>
</evidence>
<evidence type="ECO:0007744" key="44">
    <source>
    </source>
</evidence>
<evidence type="ECO:0007829" key="45">
    <source>
        <dbReference type="PDB" id="5OWO"/>
    </source>
</evidence>
<evidence type="ECO:0007829" key="46">
    <source>
        <dbReference type="PDB" id="6F1T"/>
    </source>
</evidence>
<evidence type="ECO:0007829" key="47">
    <source>
        <dbReference type="PDB" id="6F1U"/>
    </source>
</evidence>
<evidence type="ECO:0007829" key="48">
    <source>
        <dbReference type="PDB" id="6F1V"/>
    </source>
</evidence>
<evidence type="ECO:0007829" key="49">
    <source>
        <dbReference type="PDB" id="7Z8H"/>
    </source>
</evidence>
<evidence type="ECO:0007829" key="50">
    <source>
        <dbReference type="PDB" id="7Z8I"/>
    </source>
</evidence>
<evidence type="ECO:0007829" key="51">
    <source>
        <dbReference type="PDB" id="8FCY"/>
    </source>
</evidence>
<evidence type="ECO:0007829" key="52">
    <source>
        <dbReference type="PDB" id="8FD6"/>
    </source>
</evidence>
<evidence type="ECO:0007829" key="53">
    <source>
        <dbReference type="PDB" id="8FDT"/>
    </source>
</evidence>
<evidence type="ECO:0007829" key="54">
    <source>
        <dbReference type="PDB" id="8FDU"/>
    </source>
</evidence>
<feature type="initiator methionine" description="Removed" evidence="43">
    <location>
        <position position="1"/>
    </location>
</feature>
<feature type="chain" id="PRO_0000114627" description="Cytoplasmic dynein 1 heavy chain 1">
    <location>
        <begin position="2"/>
        <end position="4646"/>
    </location>
</feature>
<feature type="region of interest" description="Stem" evidence="1">
    <location>
        <begin position="53"/>
        <end position="1867"/>
    </location>
</feature>
<feature type="region of interest" description="Interaction with DYNC1I2" evidence="1">
    <location>
        <begin position="448"/>
        <end position="703"/>
    </location>
</feature>
<feature type="region of interest" description="Interaction with DYNC1LI2" evidence="1">
    <location>
        <begin position="651"/>
        <end position="802"/>
    </location>
</feature>
<feature type="region of interest" description="AAA 1" evidence="1">
    <location>
        <begin position="1868"/>
        <end position="2099"/>
    </location>
</feature>
<feature type="region of interest" description="AAA 2" evidence="1">
    <location>
        <begin position="2180"/>
        <end position="2452"/>
    </location>
</feature>
<feature type="region of interest" description="Disordered" evidence="5">
    <location>
        <begin position="2390"/>
        <end position="2411"/>
    </location>
</feature>
<feature type="region of interest" description="AAA 3" evidence="1">
    <location>
        <begin position="2556"/>
        <end position="2805"/>
    </location>
</feature>
<feature type="region of interest" description="AAA 4" evidence="1">
    <location>
        <begin position="2899"/>
        <end position="3168"/>
    </location>
</feature>
<feature type="region of interest" description="Stalk" evidence="1">
    <location>
        <begin position="3189"/>
        <end position="3500"/>
    </location>
</feature>
<feature type="region of interest" description="AAA 5" evidence="1">
    <location>
        <begin position="3553"/>
        <end position="3782"/>
    </location>
</feature>
<feature type="region of interest" description="AAA 6" evidence="1">
    <location>
        <begin position="4005"/>
        <end position="4221"/>
    </location>
</feature>
<feature type="coiled-coil region" evidence="4">
    <location>
        <begin position="181"/>
        <end position="202"/>
    </location>
</feature>
<feature type="coiled-coil region" evidence="4">
    <location>
        <begin position="455"/>
        <end position="478"/>
    </location>
</feature>
<feature type="coiled-coil region" evidence="4">
    <location>
        <begin position="543"/>
        <end position="566"/>
    </location>
</feature>
<feature type="coiled-coil region" evidence="4">
    <location>
        <begin position="1171"/>
        <end position="1252"/>
    </location>
</feature>
<feature type="coiled-coil region" evidence="4">
    <location>
        <begin position="1357"/>
        <end position="1373"/>
    </location>
</feature>
<feature type="coiled-coil region" evidence="4">
    <location>
        <begin position="3189"/>
        <end position="3275"/>
    </location>
</feature>
<feature type="coiled-coil region" evidence="4">
    <location>
        <begin position="3396"/>
        <end position="3500"/>
    </location>
</feature>
<feature type="coiled-coil region" evidence="4">
    <location>
        <begin position="3737"/>
        <end position="3800"/>
    </location>
</feature>
<feature type="binding site" evidence="4">
    <location>
        <begin position="1906"/>
        <end position="1913"/>
    </location>
    <ligand>
        <name>ATP</name>
        <dbReference type="ChEBI" id="CHEBI:30616"/>
    </ligand>
</feature>
<feature type="binding site" evidence="4">
    <location>
        <begin position="2224"/>
        <end position="2231"/>
    </location>
    <ligand>
        <name>ATP</name>
        <dbReference type="ChEBI" id="CHEBI:30616"/>
    </ligand>
</feature>
<feature type="binding site" evidence="4">
    <location>
        <begin position="2595"/>
        <end position="2602"/>
    </location>
    <ligand>
        <name>ATP</name>
        <dbReference type="ChEBI" id="CHEBI:30616"/>
    </ligand>
</feature>
<feature type="binding site" evidence="4">
    <location>
        <begin position="2937"/>
        <end position="2944"/>
    </location>
    <ligand>
        <name>ATP</name>
        <dbReference type="ChEBI" id="CHEBI:30616"/>
    </ligand>
</feature>
<feature type="modified residue" description="N-acetylserine" evidence="43">
    <location>
        <position position="2"/>
    </location>
</feature>
<feature type="modified residue" description="Phosphoserine" evidence="44">
    <location>
        <position position="70"/>
    </location>
</feature>
<feature type="modified residue" description="N6-acetyllysine" evidence="42">
    <location>
        <position position="1125"/>
    </location>
</feature>
<feature type="modified residue" description="Phosphoserine" evidence="3">
    <location>
        <position position="1230"/>
    </location>
</feature>
<feature type="modified residue" description="N6-acetyllysine" evidence="42">
    <location>
        <position position="3480"/>
    </location>
</feature>
<feature type="modified residue" description="Phosphoserine" evidence="44">
    <location>
        <position position="4162"/>
    </location>
</feature>
<feature type="modified residue" description="N6-acetyllysine" evidence="42">
    <location>
        <position position="4283"/>
    </location>
</feature>
<feature type="modified residue" description="Phosphothreonine" evidence="44">
    <location>
        <position position="4366"/>
    </location>
</feature>
<feature type="modified residue" description="Phosphoserine" evidence="41 44">
    <location>
        <position position="4368"/>
    </location>
</feature>
<feature type="sequence variant" id="VAR_073155" description="Found in a patient with spinal muscular atrophy; uncertain significance." evidence="15">
    <original>E</original>
    <variation>K</variation>
    <location>
        <position position="94"/>
    </location>
</feature>
<feature type="sequence variant" id="VAR_070580" description="In CDCBM13; dbSNP:rs1555407885." evidence="12">
    <original>K</original>
    <variation>I</variation>
    <location>
        <position position="129"/>
    </location>
</feature>
<feature type="sequence variant" id="VAR_069437" evidence="11">
    <original>E</original>
    <variation>A</variation>
    <location>
        <position position="142"/>
    </location>
</feature>
<feature type="sequence variant" id="VAR_073156" description="In SMALED1; slight increased BICD2-binding; dbSNP:rs713993043." evidence="15">
    <original>R</original>
    <variation>L</variation>
    <location>
        <position position="264"/>
    </location>
</feature>
<feature type="sequence variant" id="VAR_066651" description="In CMT2O and SMALED1; dbSNP:rs387906738." evidence="7 10">
    <original>H</original>
    <variation>R</variation>
    <location>
        <position position="306"/>
    </location>
</feature>
<feature type="sequence variant" id="VAR_067820" description="In SMALED1; disrupts dynein complex stability and function; dbSNP:rs387906741." evidence="9">
    <original>I</original>
    <variation>L</variation>
    <location>
        <position position="584"/>
    </location>
</feature>
<feature type="sequence variant" id="VAR_073157" description="In CMT2O and SMALED1; slight increased BICD2-binding; dbSNP:rs587780564." evidence="14 15">
    <original>R</original>
    <variation>C</variation>
    <location>
        <position position="598"/>
    </location>
</feature>
<feature type="sequence variant" id="VAR_070581" description="In CDCBM13." evidence="12">
    <location>
        <begin position="659"/>
        <end position="662"/>
    </location>
</feature>
<feature type="sequence variant" id="VAR_067821" description="In SMALED1; dbSNP:rs387906742." evidence="9">
    <original>K</original>
    <variation>E</variation>
    <location>
        <position position="671"/>
    </location>
</feature>
<feature type="sequence variant" id="VAR_078241" description="In SMALED1; dbSNP:rs1057518083." evidence="16">
    <original>P</original>
    <variation>L</variation>
    <location>
        <position position="776"/>
    </location>
</feature>
<feature type="sequence variant" id="VAR_067822" description="In SMALED1; dbSNP:rs387906743." evidence="9">
    <original>Y</original>
    <variation>C</variation>
    <location>
        <position position="970"/>
    </location>
</feature>
<feature type="sequence variant" id="VAR_078242" description="In SMALED1; dbSNP:rs2141280974." evidence="18">
    <original>G</original>
    <variation>E</variation>
    <location>
        <position position="1132"/>
    </location>
</feature>
<feature type="sequence variant" id="VAR_072092" description="In CMT2O; impairs function; dbSNP:rs1555408964." evidence="13">
    <original>Q</original>
    <variation>R</variation>
    <location>
        <position position="1194"/>
    </location>
</feature>
<feature type="sequence variant" id="VAR_069438" description="In dbSNP:rs369914512." evidence="11">
    <original>V</original>
    <variation>L</variation>
    <location>
        <position position="1250"/>
    </location>
</feature>
<feature type="sequence variant" id="VAR_067823" description="In CDCBM13; dbSNP:rs387906740." evidence="8 11">
    <original>E</original>
    <variation>K</variation>
    <location>
        <position position="1518"/>
    </location>
</feature>
<feature type="sequence variant" id="VAR_070582" description="In CDCBM13; dbSNP:rs797044901." evidence="12">
    <original>R</original>
    <variation>Q</variation>
    <location>
        <position position="1567"/>
    </location>
</feature>
<feature type="sequence variant" id="VAR_070583" description="In CDCBM13; dbSNP:rs879253881." evidence="12">
    <original>R</original>
    <variation>C</variation>
    <location>
        <position position="1962"/>
    </location>
</feature>
<feature type="sequence variant" id="VAR_069439" description="In dbSNP:rs1064796963." evidence="11">
    <original>V</original>
    <variation>M</variation>
    <location>
        <position position="2247"/>
    </location>
</feature>
<feature type="sequence variant" id="VAR_072093" description="In CMT2O; impairs function; dbSNP:rs1555410941." evidence="13">
    <original>E</original>
    <variation>K</variation>
    <location>
        <position position="3048"/>
    </location>
</feature>
<feature type="sequence variant" id="VAR_070584" description="In CDCBM13; dbSNP:rs1555411145." evidence="12">
    <original>K</original>
    <variation>T</variation>
    <location>
        <position position="3241"/>
    </location>
</feature>
<feature type="sequence variant" id="VAR_070585" description="In CDCBM13; shows a substantial reduction in the microtubule binding affinity compared to the wild-type control protein; dbSNP:rs397509410." evidence="12">
    <original>K</original>
    <variation>N</variation>
    <location>
        <position position="3336"/>
    </location>
</feature>
<feature type="sequence variant" id="VAR_070586" description="In CDCBM13; dbSNP:rs397509412." evidence="12">
    <original>R</original>
    <variation>Q</variation>
    <location>
        <position position="3344"/>
    </location>
</feature>
<feature type="sequence variant" id="VAR_070587" description="In CDCBM13; shows a substantial reduction in the microtubule binding affinity compared to the wild-type control protein; dbSNP:rs397509411." evidence="12 18">
    <original>R</original>
    <variation>Q</variation>
    <location>
        <position position="3384"/>
    </location>
</feature>
<feature type="sequence variant" id="VAR_065085" description="In CDCBM13; dbSNP:rs387906739." evidence="6">
    <original>H</original>
    <variation>P</variation>
    <location>
        <position position="3822"/>
    </location>
</feature>
<feature type="sequence variant" id="VAR_020889" description="In dbSNP:rs17512818." evidence="23">
    <original>D</original>
    <variation>N</variation>
    <location>
        <position position="3902"/>
    </location>
</feature>
<feature type="sequence variant" id="VAR_020890" description="In dbSNP:rs10129889." evidence="22 23">
    <original>H</original>
    <variation>Q</variation>
    <location>
        <position position="4029"/>
    </location>
</feature>
<feature type="sequence variant" id="VAR_069440" description="In dbSNP:rs1316357429." evidence="11">
    <original>R</original>
    <variation>C</variation>
    <location>
        <position position="4143"/>
    </location>
</feature>
<feature type="sequence variant" id="VAR_069441" description="In dbSNP:rs749486351." evidence="11">
    <original>A</original>
    <variation>S</variation>
    <location>
        <position position="4285"/>
    </location>
</feature>
<feature type="sequence variant" id="VAR_069442" description="In dbSNP:rs376492799." evidence="11">
    <original>A</original>
    <variation>T</variation>
    <location>
        <position position="4421"/>
    </location>
</feature>
<feature type="sequence variant" id="VAR_069443" evidence="11">
    <original>I</original>
    <variation>S</variation>
    <location>
        <position position="4507"/>
    </location>
</feature>
<feature type="sequence variant" id="VAR_069444" evidence="11">
    <original>S</original>
    <variation>G</variation>
    <location>
        <position position="4603"/>
    </location>
</feature>
<feature type="sequence conflict" description="In Ref. 5; AAB09727." evidence="24" ref="5">
    <original>LH</original>
    <variation>SD</variation>
    <location>
        <begin position="1778"/>
        <end position="1779"/>
    </location>
</feature>
<feature type="sequence conflict" description="In Ref. 5; AAB09727." evidence="24" ref="5">
    <original>M</original>
    <variation>R</variation>
    <location>
        <position position="1941"/>
    </location>
</feature>
<feature type="sequence conflict" description="In Ref. 5; AAB09727." evidence="24" ref="5">
    <original>R</original>
    <variation>N</variation>
    <location>
        <position position="2025"/>
    </location>
</feature>
<feature type="helix" evidence="45">
    <location>
        <begin position="27"/>
        <end position="41"/>
    </location>
</feature>
<feature type="strand" evidence="45">
    <location>
        <begin position="42"/>
        <end position="47"/>
    </location>
</feature>
<feature type="helix" evidence="45">
    <location>
        <begin position="50"/>
        <end position="57"/>
    </location>
</feature>
<feature type="helix" evidence="45">
    <location>
        <begin position="59"/>
        <end position="70"/>
    </location>
</feature>
<feature type="strand" evidence="46">
    <location>
        <begin position="71"/>
        <end position="73"/>
    </location>
</feature>
<feature type="strand" evidence="45">
    <location>
        <begin position="76"/>
        <end position="85"/>
    </location>
</feature>
<feature type="strand" evidence="45">
    <location>
        <begin position="97"/>
        <end position="105"/>
    </location>
</feature>
<feature type="strand" evidence="45">
    <location>
        <begin position="113"/>
        <end position="124"/>
    </location>
</feature>
<feature type="helix" evidence="45">
    <location>
        <begin position="132"/>
        <end position="134"/>
    </location>
</feature>
<feature type="strand" evidence="45">
    <location>
        <begin position="135"/>
        <end position="140"/>
    </location>
</feature>
<feature type="helix" evidence="45">
    <location>
        <begin position="145"/>
        <end position="155"/>
    </location>
</feature>
<feature type="helix" evidence="45">
    <location>
        <begin position="157"/>
        <end position="165"/>
    </location>
</feature>
<feature type="helix" evidence="45">
    <location>
        <begin position="178"/>
        <end position="199"/>
    </location>
</feature>
<feature type="helix" evidence="50">
    <location>
        <begin position="211"/>
        <end position="222"/>
    </location>
</feature>
<feature type="helix" evidence="50">
    <location>
        <begin position="229"/>
        <end position="237"/>
    </location>
</feature>
<feature type="helix" evidence="50">
    <location>
        <begin position="239"/>
        <end position="260"/>
    </location>
</feature>
<feature type="strand" evidence="50">
    <location>
        <begin position="266"/>
        <end position="269"/>
    </location>
</feature>
<feature type="helix" evidence="50">
    <location>
        <begin position="271"/>
        <end position="292"/>
    </location>
</feature>
<feature type="helix" evidence="50">
    <location>
        <begin position="295"/>
        <end position="306"/>
    </location>
</feature>
<feature type="helix" evidence="50">
    <location>
        <begin position="310"/>
        <end position="318"/>
    </location>
</feature>
<feature type="helix" evidence="50">
    <location>
        <begin position="322"/>
        <end position="332"/>
    </location>
</feature>
<feature type="helix" evidence="50">
    <location>
        <begin position="333"/>
        <end position="335"/>
    </location>
</feature>
<feature type="helix" evidence="50">
    <location>
        <begin position="341"/>
        <end position="345"/>
    </location>
</feature>
<feature type="helix" evidence="50">
    <location>
        <begin position="350"/>
        <end position="364"/>
    </location>
</feature>
<feature type="helix" evidence="50">
    <location>
        <begin position="365"/>
        <end position="368"/>
    </location>
</feature>
<feature type="helix" evidence="50">
    <location>
        <begin position="374"/>
        <end position="399"/>
    </location>
</feature>
<feature type="helix" evidence="50">
    <location>
        <begin position="401"/>
        <end position="403"/>
    </location>
</feature>
<feature type="helix" evidence="50">
    <location>
        <begin position="406"/>
        <end position="440"/>
    </location>
</feature>
<feature type="turn" evidence="50">
    <location>
        <begin position="442"/>
        <end position="444"/>
    </location>
</feature>
<feature type="helix" evidence="50">
    <location>
        <begin position="456"/>
        <end position="484"/>
    </location>
</feature>
<feature type="helix" evidence="50">
    <location>
        <begin position="514"/>
        <end position="532"/>
    </location>
</feature>
<feature type="turn" evidence="47">
    <location>
        <begin position="534"/>
        <end position="537"/>
    </location>
</feature>
<feature type="helix" evidence="50">
    <location>
        <begin position="540"/>
        <end position="574"/>
    </location>
</feature>
<feature type="helix" evidence="50">
    <location>
        <begin position="578"/>
        <end position="587"/>
    </location>
</feature>
<feature type="helix" evidence="50">
    <location>
        <begin position="590"/>
        <end position="592"/>
    </location>
</feature>
<feature type="helix" evidence="50">
    <location>
        <begin position="597"/>
        <end position="603"/>
    </location>
</feature>
<feature type="helix" evidence="50">
    <location>
        <begin position="605"/>
        <end position="624"/>
    </location>
</feature>
<feature type="turn" evidence="50">
    <location>
        <begin position="627"/>
        <end position="629"/>
    </location>
</feature>
<feature type="helix" evidence="50">
    <location>
        <begin position="631"/>
        <end position="638"/>
    </location>
</feature>
<feature type="helix" evidence="50">
    <location>
        <begin position="643"/>
        <end position="669"/>
    </location>
</feature>
<feature type="helix" evidence="50">
    <location>
        <begin position="673"/>
        <end position="675"/>
    </location>
</feature>
<feature type="helix" evidence="50">
    <location>
        <begin position="677"/>
        <end position="692"/>
    </location>
</feature>
<feature type="helix" evidence="50">
    <location>
        <begin position="696"/>
        <end position="709"/>
    </location>
</feature>
<feature type="helix" evidence="46">
    <location>
        <begin position="711"/>
        <end position="714"/>
    </location>
</feature>
<feature type="strand" evidence="50">
    <location>
        <begin position="715"/>
        <end position="723"/>
    </location>
</feature>
<feature type="helix" evidence="46">
    <location>
        <begin position="729"/>
        <end position="731"/>
    </location>
</feature>
<feature type="strand" evidence="50">
    <location>
        <begin position="732"/>
        <end position="738"/>
    </location>
</feature>
<feature type="helix" evidence="50">
    <location>
        <begin position="741"/>
        <end position="753"/>
    </location>
</feature>
<feature type="helix" evidence="50">
    <location>
        <begin position="754"/>
        <end position="756"/>
    </location>
</feature>
<feature type="helix" evidence="50">
    <location>
        <begin position="762"/>
        <end position="797"/>
    </location>
</feature>
<feature type="helix" evidence="50">
    <location>
        <begin position="799"/>
        <end position="805"/>
    </location>
</feature>
<feature type="helix" evidence="50">
    <location>
        <begin position="806"/>
        <end position="820"/>
    </location>
</feature>
<feature type="strand" evidence="48">
    <location>
        <begin position="826"/>
        <end position="828"/>
    </location>
</feature>
<feature type="helix" evidence="50">
    <location>
        <begin position="829"/>
        <end position="865"/>
    </location>
</feature>
<feature type="helix" evidence="50">
    <location>
        <begin position="871"/>
        <end position="890"/>
    </location>
</feature>
<feature type="helix" evidence="50">
    <location>
        <begin position="896"/>
        <end position="913"/>
    </location>
</feature>
<feature type="turn" evidence="50">
    <location>
        <begin position="992"/>
        <end position="995"/>
    </location>
</feature>
<feature type="helix" evidence="46">
    <location>
        <begin position="999"/>
        <end position="1002"/>
    </location>
</feature>
<feature type="turn" evidence="46">
    <location>
        <begin position="1009"/>
        <end position="1011"/>
    </location>
</feature>
<feature type="helix" evidence="50">
    <location>
        <begin position="1014"/>
        <end position="1017"/>
    </location>
</feature>
<feature type="helix" evidence="50">
    <location>
        <begin position="1020"/>
        <end position="1024"/>
    </location>
</feature>
<feature type="helix" evidence="46">
    <location>
        <begin position="1033"/>
        <end position="1050"/>
    </location>
</feature>
<feature type="helix" evidence="51">
    <location>
        <begin position="1464"/>
        <end position="1470"/>
    </location>
</feature>
<feature type="strand" evidence="51">
    <location>
        <begin position="1477"/>
        <end position="1479"/>
    </location>
</feature>
<feature type="strand" evidence="51">
    <location>
        <begin position="1485"/>
        <end position="1487"/>
    </location>
</feature>
<feature type="turn" evidence="51">
    <location>
        <begin position="1492"/>
        <end position="1494"/>
    </location>
</feature>
<feature type="helix" evidence="51">
    <location>
        <begin position="1495"/>
        <end position="1509"/>
    </location>
</feature>
<feature type="strand" evidence="51">
    <location>
        <begin position="1514"/>
        <end position="1516"/>
    </location>
</feature>
<feature type="helix" evidence="52">
    <location>
        <begin position="1544"/>
        <end position="1551"/>
    </location>
</feature>
<feature type="helix" evidence="52">
    <location>
        <begin position="1556"/>
        <end position="1559"/>
    </location>
</feature>
<feature type="helix" evidence="52">
    <location>
        <begin position="1563"/>
        <end position="1568"/>
    </location>
</feature>
<feature type="turn" evidence="51">
    <location>
        <begin position="1590"/>
        <end position="1592"/>
    </location>
</feature>
<feature type="helix" evidence="52">
    <location>
        <begin position="1608"/>
        <end position="1625"/>
    </location>
</feature>
<feature type="helix" evidence="52">
    <location>
        <begin position="1627"/>
        <end position="1631"/>
    </location>
</feature>
<feature type="helix" evidence="52">
    <location>
        <begin position="1634"/>
        <end position="1642"/>
    </location>
</feature>
<feature type="helix" evidence="52">
    <location>
        <begin position="1647"/>
        <end position="1652"/>
    </location>
</feature>
<feature type="helix" evidence="52">
    <location>
        <begin position="1654"/>
        <end position="1657"/>
    </location>
</feature>
<feature type="strand" evidence="52">
    <location>
        <begin position="1658"/>
        <end position="1666"/>
    </location>
</feature>
<feature type="strand" evidence="52">
    <location>
        <begin position="1672"/>
        <end position="1678"/>
    </location>
</feature>
<feature type="strand" evidence="51">
    <location>
        <begin position="1679"/>
        <end position="1681"/>
    </location>
</feature>
<feature type="strand" evidence="52">
    <location>
        <begin position="1683"/>
        <end position="1691"/>
    </location>
</feature>
<feature type="turn" evidence="52">
    <location>
        <begin position="1692"/>
        <end position="1694"/>
    </location>
</feature>
<feature type="helix" evidence="52">
    <location>
        <begin position="1698"/>
        <end position="1728"/>
    </location>
</feature>
<feature type="helix" evidence="52">
    <location>
        <begin position="1735"/>
        <end position="1744"/>
    </location>
</feature>
<feature type="helix" evidence="52">
    <location>
        <begin position="1747"/>
        <end position="1768"/>
    </location>
</feature>
<feature type="strand" evidence="52">
    <location>
        <begin position="1771"/>
        <end position="1773"/>
    </location>
</feature>
<feature type="helix" evidence="52">
    <location>
        <begin position="1778"/>
        <end position="1797"/>
    </location>
</feature>
<feature type="helix" evidence="52">
    <location>
        <begin position="1802"/>
        <end position="1828"/>
    </location>
</feature>
<feature type="helix" evidence="52">
    <location>
        <begin position="1836"/>
        <end position="1839"/>
    </location>
</feature>
<feature type="strand" evidence="52">
    <location>
        <begin position="1843"/>
        <end position="1846"/>
    </location>
</feature>
<feature type="turn" evidence="53">
    <location>
        <begin position="1852"/>
        <end position="1854"/>
    </location>
</feature>
<feature type="strand" evidence="52">
    <location>
        <begin position="1856"/>
        <end position="1860"/>
    </location>
</feature>
<feature type="strand" evidence="51">
    <location>
        <begin position="1865"/>
        <end position="1867"/>
    </location>
</feature>
<feature type="helix" evidence="52">
    <location>
        <begin position="1883"/>
        <end position="1896"/>
    </location>
</feature>
<feature type="helix" evidence="52">
    <location>
        <begin position="1897"/>
        <end position="1899"/>
    </location>
</feature>
<feature type="strand" evidence="52">
    <location>
        <begin position="1901"/>
        <end position="1905"/>
    </location>
</feature>
<feature type="strand" evidence="52">
    <location>
        <begin position="1907"/>
        <end position="1911"/>
    </location>
</feature>
<feature type="helix" evidence="52">
    <location>
        <begin position="1912"/>
        <end position="1922"/>
    </location>
</feature>
<feature type="strand" evidence="52">
    <location>
        <begin position="1927"/>
        <end position="1931"/>
    </location>
</feature>
<feature type="strand" evidence="51">
    <location>
        <begin position="1933"/>
        <end position="1935"/>
    </location>
</feature>
<feature type="helix" evidence="52">
    <location>
        <begin position="1938"/>
        <end position="1951"/>
    </location>
</feature>
<feature type="strand" evidence="52">
    <location>
        <begin position="1954"/>
        <end position="1959"/>
    </location>
</feature>
<feature type="helix" evidence="52">
    <location>
        <begin position="1960"/>
        <end position="1962"/>
    </location>
</feature>
<feature type="helix" evidence="52">
    <location>
        <begin position="1965"/>
        <end position="1982"/>
    </location>
</feature>
<feature type="helix" evidence="51">
    <location>
        <begin position="1983"/>
        <end position="1986"/>
    </location>
</feature>
<feature type="strand" evidence="49">
    <location>
        <begin position="1988"/>
        <end position="1990"/>
    </location>
</feature>
<feature type="helix" evidence="49">
    <location>
        <begin position="1992"/>
        <end position="1994"/>
    </location>
</feature>
<feature type="strand" evidence="52">
    <location>
        <begin position="1998"/>
        <end position="2007"/>
    </location>
</feature>
<feature type="strand" evidence="52">
    <location>
        <begin position="2013"/>
        <end position="2018"/>
    </location>
</feature>
<feature type="helix" evidence="52">
    <location>
        <begin position="2030"/>
        <end position="2033"/>
    </location>
</feature>
<feature type="strand" evidence="52">
    <location>
        <begin position="2036"/>
        <end position="2040"/>
    </location>
</feature>
<feature type="helix" evidence="52">
    <location>
        <begin position="2046"/>
        <end position="2057"/>
    </location>
</feature>
<feature type="helix" evidence="52">
    <location>
        <begin position="2062"/>
        <end position="2079"/>
    </location>
</feature>
<feature type="helix" evidence="52">
    <location>
        <begin position="2090"/>
        <end position="2113"/>
    </location>
</feature>
<feature type="helix" evidence="49">
    <location>
        <begin position="2124"/>
        <end position="2129"/>
    </location>
</feature>
<feature type="helix" evidence="52">
    <location>
        <begin position="2133"/>
        <end position="2144"/>
    </location>
</feature>
<feature type="helix" evidence="53">
    <location>
        <begin position="2146"/>
        <end position="2148"/>
    </location>
</feature>
<feature type="helix" evidence="52">
    <location>
        <begin position="2151"/>
        <end position="2153"/>
    </location>
</feature>
<feature type="helix" evidence="52">
    <location>
        <begin position="2154"/>
        <end position="2164"/>
    </location>
</feature>
<feature type="helix" evidence="52">
    <location>
        <begin position="2176"/>
        <end position="2188"/>
    </location>
</feature>
<feature type="strand" evidence="51">
    <location>
        <begin position="2195"/>
        <end position="2198"/>
    </location>
</feature>
<feature type="helix" evidence="52">
    <location>
        <begin position="2201"/>
        <end position="2216"/>
    </location>
</feature>
<feature type="strand" evidence="52">
    <location>
        <begin position="2218"/>
        <end position="2223"/>
    </location>
</feature>
<feature type="strand" evidence="52">
    <location>
        <begin position="2226"/>
        <end position="2229"/>
    </location>
</feature>
<feature type="helix" evidence="52">
    <location>
        <begin position="2230"/>
        <end position="2245"/>
    </location>
</feature>
<feature type="strand" evidence="52">
    <location>
        <begin position="2249"/>
        <end position="2254"/>
    </location>
</feature>
<feature type="turn" evidence="53">
    <location>
        <begin position="2256"/>
        <end position="2258"/>
    </location>
</feature>
<feature type="helix" evidence="52">
    <location>
        <begin position="2261"/>
        <end position="2265"/>
    </location>
</feature>
<feature type="strand" evidence="52">
    <location>
        <begin position="2266"/>
        <end position="2268"/>
    </location>
</feature>
<feature type="turn" evidence="52">
    <location>
        <begin position="2270"/>
        <end position="2272"/>
    </location>
</feature>
<feature type="strand" evidence="52">
    <location>
        <begin position="2275"/>
        <end position="2277"/>
    </location>
</feature>
<feature type="helix" evidence="52">
    <location>
        <begin position="2279"/>
        <end position="2288"/>
    </location>
</feature>
<feature type="turn" evidence="49">
    <location>
        <begin position="2290"/>
        <end position="2292"/>
    </location>
</feature>
<feature type="helix" evidence="52">
    <location>
        <begin position="2294"/>
        <end position="2296"/>
    </location>
</feature>
<feature type="strand" evidence="52">
    <location>
        <begin position="2297"/>
        <end position="2305"/>
    </location>
</feature>
<feature type="turn" evidence="52">
    <location>
        <begin position="2309"/>
        <end position="2311"/>
    </location>
</feature>
<feature type="helix" evidence="52">
    <location>
        <begin position="2313"/>
        <end position="2315"/>
    </location>
</feature>
<feature type="turn" evidence="52">
    <location>
        <begin position="2316"/>
        <end position="2318"/>
    </location>
</feature>
<feature type="strand" evidence="52">
    <location>
        <begin position="2324"/>
        <end position="2326"/>
    </location>
</feature>
<feature type="turn" evidence="51">
    <location>
        <begin position="2328"/>
        <end position="2330"/>
    </location>
</feature>
<feature type="strand" evidence="52">
    <location>
        <begin position="2332"/>
        <end position="2334"/>
    </location>
</feature>
<feature type="strand" evidence="52">
    <location>
        <begin position="2339"/>
        <end position="2346"/>
    </location>
</feature>
<feature type="helix" evidence="52">
    <location>
        <begin position="2353"/>
        <end position="2358"/>
    </location>
</feature>
<feature type="strand" evidence="52">
    <location>
        <begin position="2359"/>
        <end position="2363"/>
    </location>
</feature>
<feature type="turn" evidence="52">
    <location>
        <begin position="2366"/>
        <end position="2368"/>
    </location>
</feature>
<feature type="helix" evidence="52">
    <location>
        <begin position="2371"/>
        <end position="2383"/>
    </location>
</feature>
<feature type="turn" evidence="49">
    <location>
        <begin position="2387"/>
        <end position="2395"/>
    </location>
</feature>
<feature type="helix" evidence="49">
    <location>
        <begin position="2396"/>
        <end position="2399"/>
    </location>
</feature>
<feature type="helix" evidence="52">
    <location>
        <begin position="2411"/>
        <end position="2423"/>
    </location>
</feature>
<feature type="helix" evidence="52">
    <location>
        <begin position="2424"/>
        <end position="2426"/>
    </location>
</feature>
<feature type="strand" evidence="51">
    <location>
        <begin position="2428"/>
        <end position="2430"/>
    </location>
</feature>
<feature type="helix" evidence="52">
    <location>
        <begin position="2432"/>
        <end position="2440"/>
    </location>
</feature>
<feature type="helix" evidence="52">
    <location>
        <begin position="2451"/>
        <end position="2475"/>
    </location>
</feature>
<feature type="strand" evidence="52">
    <location>
        <begin position="2477"/>
        <end position="2479"/>
    </location>
</feature>
<feature type="helix" evidence="52">
    <location>
        <begin position="2483"/>
        <end position="2503"/>
    </location>
</feature>
<feature type="helix" evidence="52">
    <location>
        <begin position="2508"/>
        <end position="2521"/>
    </location>
</feature>
<feature type="strand" evidence="53">
    <location>
        <begin position="2530"/>
        <end position="2532"/>
    </location>
</feature>
<feature type="helix" evidence="52">
    <location>
        <begin position="2534"/>
        <end position="2536"/>
    </location>
</feature>
<feature type="strand" evidence="52">
    <location>
        <begin position="2537"/>
        <end position="2539"/>
    </location>
</feature>
<feature type="turn" evidence="51">
    <location>
        <begin position="2541"/>
        <end position="2543"/>
    </location>
</feature>
<feature type="strand" evidence="52">
    <location>
        <begin position="2545"/>
        <end position="2547"/>
    </location>
</feature>
<feature type="helix" evidence="52">
    <location>
        <begin position="2548"/>
        <end position="2551"/>
    </location>
</feature>
<feature type="strand" evidence="52">
    <location>
        <begin position="2559"/>
        <end position="2561"/>
    </location>
</feature>
<feature type="helix" evidence="52">
    <location>
        <begin position="2572"/>
        <end position="2586"/>
    </location>
</feature>
<feature type="strand" evidence="52">
    <location>
        <begin position="2591"/>
        <end position="2594"/>
    </location>
</feature>
<feature type="helix" evidence="52">
    <location>
        <begin position="2601"/>
        <end position="2611"/>
    </location>
</feature>
<feature type="strand" evidence="49">
    <location>
        <begin position="2612"/>
        <end position="2614"/>
    </location>
</feature>
<feature type="strand" evidence="52">
    <location>
        <begin position="2615"/>
        <end position="2621"/>
    </location>
</feature>
<feature type="helix" evidence="52">
    <location>
        <begin position="2628"/>
        <end position="2638"/>
    </location>
</feature>
<feature type="strand" evidence="52">
    <location>
        <begin position="2641"/>
        <end position="2643"/>
    </location>
</feature>
<feature type="strand" evidence="52">
    <location>
        <begin position="2645"/>
        <end position="2651"/>
    </location>
</feature>
<feature type="strand" evidence="52">
    <location>
        <begin position="2658"/>
        <end position="2665"/>
    </location>
</feature>
<feature type="turn" evidence="54">
    <location>
        <begin position="2673"/>
        <end position="2675"/>
    </location>
</feature>
<feature type="helix" evidence="52">
    <location>
        <begin position="2678"/>
        <end position="2688"/>
    </location>
</feature>
<feature type="strand" evidence="52">
    <location>
        <begin position="2689"/>
        <end position="2693"/>
    </location>
</feature>
<feature type="turn" evidence="52">
    <location>
        <begin position="2695"/>
        <end position="2697"/>
    </location>
</feature>
<feature type="strand" evidence="52">
    <location>
        <begin position="2700"/>
        <end position="2712"/>
    </location>
</feature>
<feature type="helix" evidence="52">
    <location>
        <begin position="2725"/>
        <end position="2728"/>
    </location>
</feature>
<feature type="strand" evidence="52">
    <location>
        <begin position="2733"/>
        <end position="2735"/>
    </location>
</feature>
<feature type="helix" evidence="52">
    <location>
        <begin position="2741"/>
        <end position="2755"/>
    </location>
</feature>
<feature type="helix" evidence="53">
    <location>
        <begin position="2756"/>
        <end position="2758"/>
    </location>
</feature>
<feature type="turn" evidence="51">
    <location>
        <begin position="2760"/>
        <end position="2762"/>
    </location>
</feature>
<feature type="helix" evidence="52">
    <location>
        <begin position="2763"/>
        <end position="2765"/>
    </location>
</feature>
<feature type="helix" evidence="52">
    <location>
        <begin position="2766"/>
        <end position="2783"/>
    </location>
</feature>
<feature type="turn" evidence="52">
    <location>
        <begin position="2786"/>
        <end position="2788"/>
    </location>
</feature>
<feature type="helix" evidence="52">
    <location>
        <begin position="2796"/>
        <end position="2810"/>
    </location>
</feature>
<feature type="helix" evidence="52">
    <location>
        <begin position="2818"/>
        <end position="2833"/>
    </location>
</feature>
<feature type="strand" evidence="53">
    <location>
        <begin position="2834"/>
        <end position="2836"/>
    </location>
</feature>
<feature type="helix" evidence="52">
    <location>
        <begin position="2840"/>
        <end position="2857"/>
    </location>
</feature>
<feature type="strand" evidence="52">
    <location>
        <begin position="2859"/>
        <end position="2861"/>
    </location>
</feature>
<feature type="helix" evidence="52">
    <location>
        <begin position="2863"/>
        <end position="2866"/>
    </location>
</feature>
<feature type="turn" evidence="51">
    <location>
        <begin position="2868"/>
        <end position="2870"/>
    </location>
</feature>
<feature type="strand" evidence="52">
    <location>
        <begin position="2873"/>
        <end position="2880"/>
    </location>
</feature>
<feature type="helix" evidence="52">
    <location>
        <begin position="2886"/>
        <end position="2903"/>
    </location>
</feature>
<feature type="helix" evidence="52">
    <location>
        <begin position="2913"/>
        <end position="2927"/>
    </location>
</feature>
<feature type="strand" evidence="52">
    <location>
        <begin position="2932"/>
        <end position="2937"/>
    </location>
</feature>
<feature type="helix" evidence="52">
    <location>
        <begin position="2943"/>
        <end position="2954"/>
    </location>
</feature>
<feature type="strand" evidence="52">
    <location>
        <begin position="2957"/>
        <end position="2960"/>
    </location>
</feature>
<feature type="helix" evidence="52">
    <location>
        <begin position="2969"/>
        <end position="2984"/>
    </location>
</feature>
<feature type="helix" evidence="51">
    <location>
        <begin position="2985"/>
        <end position="2987"/>
    </location>
</feature>
<feature type="strand" evidence="52">
    <location>
        <begin position="2990"/>
        <end position="2995"/>
    </location>
</feature>
<feature type="turn" evidence="52">
    <location>
        <begin position="2996"/>
        <end position="2998"/>
    </location>
</feature>
<feature type="helix" evidence="52">
    <location>
        <begin position="3002"/>
        <end position="3014"/>
    </location>
</feature>
<feature type="helix" evidence="52">
    <location>
        <begin position="3024"/>
        <end position="3040"/>
    </location>
</feature>
<feature type="helix" evidence="52">
    <location>
        <begin position="3047"/>
        <end position="3060"/>
    </location>
</feature>
<feature type="strand" evidence="52">
    <location>
        <begin position="3063"/>
        <end position="3068"/>
    </location>
</feature>
<feature type="turn" evidence="52">
    <location>
        <begin position="3072"/>
        <end position="3074"/>
    </location>
</feature>
<feature type="helix" evidence="52">
    <location>
        <begin position="3075"/>
        <end position="3081"/>
    </location>
</feature>
<feature type="helix" evidence="52">
    <location>
        <begin position="3083"/>
        <end position="3085"/>
    </location>
</feature>
<feature type="strand" evidence="52">
    <location>
        <begin position="3088"/>
        <end position="3096"/>
    </location>
</feature>
<feature type="helix" evidence="52">
    <location>
        <begin position="3099"/>
        <end position="3110"/>
    </location>
</feature>
<feature type="helix" evidence="52">
    <location>
        <begin position="3139"/>
        <end position="3163"/>
    </location>
</feature>
<feature type="helix" evidence="52">
    <location>
        <begin position="3173"/>
        <end position="3219"/>
    </location>
</feature>
<feature type="helix" evidence="52">
    <location>
        <begin position="3473"/>
        <end position="3501"/>
    </location>
</feature>
<feature type="helix" evidence="52">
    <location>
        <begin position="3503"/>
        <end position="3516"/>
    </location>
</feature>
<feature type="strand" evidence="52">
    <location>
        <begin position="3517"/>
        <end position="3520"/>
    </location>
</feature>
<feature type="helix" evidence="52">
    <location>
        <begin position="3522"/>
        <end position="3538"/>
    </location>
</feature>
<feature type="helix" evidence="52">
    <location>
        <begin position="3549"/>
        <end position="3552"/>
    </location>
</feature>
<feature type="helix" evidence="52">
    <location>
        <begin position="3556"/>
        <end position="3564"/>
    </location>
</feature>
<feature type="helix" evidence="52">
    <location>
        <begin position="3571"/>
        <end position="3581"/>
    </location>
</feature>
<feature type="strand" evidence="52">
    <location>
        <begin position="3587"/>
        <end position="3590"/>
    </location>
</feature>
<feature type="strand" evidence="52">
    <location>
        <begin position="3592"/>
        <end position="3594"/>
    </location>
</feature>
<feature type="helix" evidence="52">
    <location>
        <begin position="3595"/>
        <end position="3603"/>
    </location>
</feature>
<feature type="turn" evidence="52">
    <location>
        <begin position="3604"/>
        <end position="3608"/>
    </location>
</feature>
<feature type="strand" evidence="52">
    <location>
        <begin position="3610"/>
        <end position="3616"/>
    </location>
</feature>
<feature type="helix" evidence="52">
    <location>
        <begin position="3619"/>
        <end position="3629"/>
    </location>
</feature>
<feature type="strand" evidence="52">
    <location>
        <begin position="3633"/>
        <end position="3636"/>
    </location>
</feature>
<feature type="helix" evidence="52">
    <location>
        <begin position="3638"/>
        <end position="3640"/>
    </location>
</feature>
<feature type="helix" evidence="52">
    <location>
        <begin position="3643"/>
        <end position="3645"/>
    </location>
</feature>
<feature type="helix" evidence="52">
    <location>
        <begin position="3646"/>
        <end position="3650"/>
    </location>
</feature>
<feature type="strand" evidence="52">
    <location>
        <begin position="3654"/>
        <end position="3656"/>
    </location>
</feature>
<feature type="strand" evidence="52">
    <location>
        <begin position="3659"/>
        <end position="3664"/>
    </location>
</feature>
<feature type="strand" evidence="52">
    <location>
        <begin position="3667"/>
        <end position="3670"/>
    </location>
</feature>
<feature type="strand" evidence="52">
    <location>
        <begin position="3677"/>
        <end position="3682"/>
    </location>
</feature>
<feature type="helix" evidence="52">
    <location>
        <begin position="3690"/>
        <end position="3693"/>
    </location>
</feature>
<feature type="strand" evidence="52">
    <location>
        <begin position="3696"/>
        <end position="3700"/>
    </location>
</feature>
<feature type="helix" evidence="52">
    <location>
        <begin position="3705"/>
        <end position="3720"/>
    </location>
</feature>
<feature type="helix" evidence="52">
    <location>
        <begin position="3722"/>
        <end position="3755"/>
    </location>
</feature>
<feature type="strand" evidence="52">
    <location>
        <begin position="3759"/>
        <end position="3761"/>
    </location>
</feature>
<feature type="helix" evidence="52">
    <location>
        <begin position="3763"/>
        <end position="3786"/>
    </location>
</feature>
<feature type="helix" evidence="52">
    <location>
        <begin position="3789"/>
        <end position="3798"/>
    </location>
</feature>
<feature type="helix" evidence="52">
    <location>
        <begin position="3802"/>
        <end position="3817"/>
    </location>
</feature>
<feature type="turn" evidence="52">
    <location>
        <begin position="3818"/>
        <end position="3821"/>
    </location>
</feature>
<feature type="helix" evidence="52">
    <location>
        <begin position="3829"/>
        <end position="3841"/>
    </location>
</feature>
<feature type="helix" evidence="52">
    <location>
        <begin position="3844"/>
        <end position="3846"/>
    </location>
</feature>
<feature type="helix" evidence="52">
    <location>
        <begin position="3852"/>
        <end position="3872"/>
    </location>
</feature>
<feature type="helix" evidence="52">
    <location>
        <begin position="3877"/>
        <end position="3879"/>
    </location>
</feature>
<feature type="helix" evidence="52">
    <location>
        <begin position="3880"/>
        <end position="3893"/>
    </location>
</feature>
<feature type="strand" evidence="52">
    <location>
        <begin position="3895"/>
        <end position="3898"/>
    </location>
</feature>
<feature type="helix" evidence="52">
    <location>
        <begin position="3902"/>
        <end position="3910"/>
    </location>
</feature>
<feature type="helix" evidence="51">
    <location>
        <begin position="3911"/>
        <end position="3913"/>
    </location>
</feature>
<feature type="helix" evidence="52">
    <location>
        <begin position="3929"/>
        <end position="3938"/>
    </location>
</feature>
<feature type="turn" evidence="52">
    <location>
        <begin position="3943"/>
        <end position="3946"/>
    </location>
</feature>
<feature type="helix" evidence="52">
    <location>
        <begin position="3947"/>
        <end position="3952"/>
    </location>
</feature>
<feature type="helix" evidence="52">
    <location>
        <begin position="3956"/>
        <end position="3961"/>
    </location>
</feature>
<feature type="helix" evidence="52">
    <location>
        <begin position="3966"/>
        <end position="3968"/>
    </location>
</feature>
<feature type="helix" evidence="52">
    <location>
        <begin position="3982"/>
        <end position="3996"/>
    </location>
</feature>
<feature type="helix" evidence="52">
    <location>
        <begin position="3998"/>
        <end position="4000"/>
    </location>
</feature>
<feature type="helix" evidence="52">
    <location>
        <begin position="4001"/>
        <end position="4012"/>
    </location>
</feature>
<feature type="turn" evidence="52">
    <location>
        <begin position="4018"/>
        <end position="4022"/>
    </location>
</feature>
<feature type="helix" evidence="52">
    <location>
        <begin position="4027"/>
        <end position="4033"/>
    </location>
</feature>
<feature type="strand" evidence="52">
    <location>
        <begin position="4037"/>
        <end position="4039"/>
    </location>
</feature>
<feature type="strand" evidence="52">
    <location>
        <begin position="4041"/>
        <end position="4045"/>
    </location>
</feature>
<feature type="helix" evidence="52">
    <location>
        <begin position="4052"/>
        <end position="4061"/>
    </location>
</feature>
<feature type="strand" evidence="52">
    <location>
        <begin position="4066"/>
        <end position="4070"/>
    </location>
</feature>
<feature type="turn" evidence="52">
    <location>
        <begin position="4073"/>
        <end position="4075"/>
    </location>
</feature>
<feature type="helix" evidence="52">
    <location>
        <begin position="4076"/>
        <end position="4088"/>
    </location>
</feature>
<feature type="strand" evidence="52">
    <location>
        <begin position="4093"/>
        <end position="4097"/>
    </location>
</feature>
<feature type="turn" evidence="52">
    <location>
        <begin position="4098"/>
        <end position="4100"/>
    </location>
</feature>
<feature type="helix" evidence="52">
    <location>
        <begin position="4103"/>
        <end position="4113"/>
    </location>
</feature>
<feature type="strand" evidence="52">
    <location>
        <begin position="4123"/>
        <end position="4129"/>
    </location>
</feature>
<feature type="helix" evidence="52">
    <location>
        <begin position="4136"/>
        <end position="4141"/>
    </location>
</feature>
<feature type="strand" evidence="52">
    <location>
        <begin position="4142"/>
        <end position="4147"/>
    </location>
</feature>
<feature type="helix" evidence="52">
    <location>
        <begin position="4152"/>
        <end position="4163"/>
    </location>
</feature>
<feature type="turn" evidence="52">
    <location>
        <begin position="4166"/>
        <end position="4170"/>
    </location>
</feature>
<feature type="strand" evidence="53">
    <location>
        <begin position="4171"/>
        <end position="4173"/>
    </location>
</feature>
<feature type="helix" evidence="52">
    <location>
        <begin position="4175"/>
        <end position="4192"/>
    </location>
</feature>
<feature type="helix" evidence="52">
    <location>
        <begin position="4194"/>
        <end position="4196"/>
    </location>
</feature>
<feature type="turn" evidence="52">
    <location>
        <begin position="4197"/>
        <end position="4199"/>
    </location>
</feature>
<feature type="strand" evidence="52">
    <location>
        <begin position="4200"/>
        <end position="4203"/>
    </location>
</feature>
<feature type="helix" evidence="52">
    <location>
        <begin position="4209"/>
        <end position="4226"/>
    </location>
</feature>
<feature type="strand" evidence="52">
    <location>
        <begin position="4227"/>
        <end position="4229"/>
    </location>
</feature>
<feature type="turn" evidence="52">
    <location>
        <begin position="4235"/>
        <end position="4237"/>
    </location>
</feature>
<feature type="helix" evidence="52">
    <location>
        <begin position="4240"/>
        <end position="4244"/>
    </location>
</feature>
<feature type="helix" evidence="52">
    <location>
        <begin position="4246"/>
        <end position="4249"/>
    </location>
</feature>
<feature type="strand" evidence="52">
    <location>
        <begin position="4252"/>
        <end position="4255"/>
    </location>
</feature>
<feature type="helix" evidence="52">
    <location>
        <begin position="4259"/>
        <end position="4272"/>
    </location>
</feature>
<feature type="helix" evidence="52">
    <location>
        <begin position="4275"/>
        <end position="4277"/>
    </location>
</feature>
<feature type="strand" evidence="52">
    <location>
        <begin position="4278"/>
        <end position="4281"/>
    </location>
</feature>
<feature type="strand" evidence="52">
    <location>
        <begin position="4283"/>
        <end position="4287"/>
    </location>
</feature>
<feature type="strand" evidence="53">
    <location>
        <begin position="4288"/>
        <end position="4291"/>
    </location>
</feature>
<feature type="helix" evidence="52">
    <location>
        <begin position="4302"/>
        <end position="4310"/>
    </location>
</feature>
<feature type="helix" evidence="52">
    <location>
        <begin position="4318"/>
        <end position="4321"/>
    </location>
</feature>
<feature type="helix" evidence="52">
    <location>
        <begin position="4325"/>
        <end position="4327"/>
    </location>
</feature>
<feature type="helix" evidence="52">
    <location>
        <begin position="4329"/>
        <end position="4346"/>
    </location>
</feature>
<feature type="helix" evidence="52">
    <location>
        <begin position="4376"/>
        <end position="4390"/>
    </location>
</feature>
<feature type="turn" evidence="52">
    <location>
        <begin position="4402"/>
        <end position="4406"/>
    </location>
</feature>
<feature type="helix" evidence="52">
    <location>
        <begin position="4408"/>
        <end position="4438"/>
    </location>
</feature>
<feature type="helix" evidence="52">
    <location>
        <begin position="4446"/>
        <end position="4456"/>
    </location>
</feature>
<feature type="turn" evidence="52">
    <location>
        <begin position="4462"/>
        <end position="4464"/>
    </location>
</feature>
<feature type="helix" evidence="52">
    <location>
        <begin position="4475"/>
        <end position="4498"/>
    </location>
</feature>
<feature type="strand" evidence="52">
    <location>
        <begin position="4500"/>
        <end position="4507"/>
    </location>
</feature>
<feature type="strand" evidence="52">
    <location>
        <begin position="4509"/>
        <end position="4511"/>
    </location>
</feature>
<feature type="helix" evidence="52">
    <location>
        <begin position="4517"/>
        <end position="4531"/>
    </location>
</feature>
<feature type="strand" evidence="52">
    <location>
        <begin position="4536"/>
        <end position="4538"/>
    </location>
</feature>
<feature type="strand" evidence="52">
    <location>
        <begin position="4540"/>
        <end position="4545"/>
    </location>
</feature>
<feature type="strand" evidence="52">
    <location>
        <begin position="4557"/>
        <end position="4561"/>
    </location>
</feature>
<feature type="strand" evidence="52">
    <location>
        <begin position="4563"/>
        <end position="4568"/>
    </location>
</feature>
<feature type="strand" evidence="52">
    <location>
        <begin position="4571"/>
        <end position="4575"/>
    </location>
</feature>
<feature type="strand" evidence="52">
    <location>
        <begin position="4579"/>
        <end position="4581"/>
    </location>
</feature>
<feature type="strand" evidence="52">
    <location>
        <begin position="4583"/>
        <end position="4585"/>
    </location>
</feature>
<feature type="strand" evidence="52">
    <location>
        <begin position="4588"/>
        <end position="4593"/>
    </location>
</feature>
<feature type="strand" evidence="52">
    <location>
        <begin position="4604"/>
        <end position="4614"/>
    </location>
</feature>
<feature type="strand" evidence="52">
    <location>
        <begin position="4618"/>
        <end position="4626"/>
    </location>
</feature>
<feature type="helix" evidence="52">
    <location>
        <begin position="4632"/>
        <end position="4637"/>
    </location>
</feature>
<feature type="strand" evidence="51">
    <location>
        <begin position="4641"/>
        <end position="4643"/>
    </location>
</feature>
<comment type="function">
    <text evidence="17">Cytoplasmic dynein 1 acts as a motor for the intracellular retrograde motility of vesicles and organelles along microtubules. Dynein has ATPase activity; the force-producing power stroke is thought to occur on release of ADP. Plays a role in mitotic spindle assembly and metaphase plate congression (PubMed:27462074).</text>
</comment>
<comment type="subunit">
    <text evidence="2 3 15 19 20 21">Homodimer. The cytoplasmic dynein 1 complex consists of two catalytic heavy chains (HCs) and a number of non-catalytic subunits presented by intermediate chains (ICs), light intermediate chains (LICs) and light chains (LCs); the composition seems to vary in respect to the IC, LIC and LC composition. The heavy chain homodimer serves as a scaffold for the probable homodimeric assembly of the respective non-catalytic subunits. The ICs and LICs bind directly to the HC dimer and dynein LCs assemble on the IC dimer (PubMed:29420470, PubMed:36071160). Interacts with DYNC1LI1; DYNC1LI1 and DYNC1LI2 bind mutually exclusive to DYNC1H1. Interacts with DYNC1LI2; DYNC1LI1 and DYNC1LI2 bind mutually exclusive to DYNC1H1. Interacts with DYNC1I2 (By similarity). Interacts with BICD2 (PubMed:25512093). Interacts with isoform 2 of CRACR2A (PubMed:31092558). Interacts with DNALI1 (By similarity).</text>
</comment>
<comment type="interaction">
    <interactant intactId="EBI-356015">
        <id>Q14204</id>
    </interactant>
    <interactant intactId="EBI-941975">
        <id>Q01484</id>
        <label>ANK2</label>
    </interactant>
    <organismsDiffer>false</organismsDiffer>
    <experiments>3</experiments>
</comment>
<comment type="interaction">
    <interactant intactId="EBI-356015">
        <id>Q14204</id>
    </interactant>
    <interactant intactId="EBI-2875816">
        <id>Q9NP61</id>
        <label>ARFGAP3</label>
    </interactant>
    <organismsDiffer>false</organismsDiffer>
    <experiments>3</experiments>
</comment>
<comment type="interaction">
    <interactant intactId="EBI-356015">
        <id>Q14204</id>
    </interactant>
    <interactant intactId="EBI-12092171">
        <id>Q12797-6</id>
        <label>ASPH</label>
    </interactant>
    <organismsDiffer>false</organismsDiffer>
    <experiments>3</experiments>
</comment>
<comment type="interaction">
    <interactant intactId="EBI-356015">
        <id>Q14204</id>
    </interactant>
    <interactant intactId="EBI-12811889">
        <id>Q9Y6H3</id>
        <label>ATP23</label>
    </interactant>
    <organismsDiffer>false</organismsDiffer>
    <experiments>3</experiments>
</comment>
<comment type="interaction">
    <interactant intactId="EBI-356015">
        <id>Q14204</id>
    </interactant>
    <interactant intactId="EBI-747185">
        <id>O95817</id>
        <label>BAG3</label>
    </interactant>
    <organismsDiffer>false</organismsDiffer>
    <experiments>3</experiments>
</comment>
<comment type="interaction">
    <interactant intactId="EBI-356015">
        <id>Q14204</id>
    </interactant>
    <interactant intactId="EBI-745073">
        <id>Q9BXY8</id>
        <label>BEX2</label>
    </interactant>
    <organismsDiffer>false</organismsDiffer>
    <experiments>3</experiments>
</comment>
<comment type="interaction">
    <interactant intactId="EBI-356015">
        <id>Q14204</id>
    </interactant>
    <interactant intactId="EBI-21557060">
        <id>Q7L1Q6-2</id>
        <label>BZW1</label>
    </interactant>
    <organismsDiffer>false</organismsDiffer>
    <experiments>3</experiments>
</comment>
<comment type="interaction">
    <interactant intactId="EBI-356015">
        <id>Q14204</id>
    </interactant>
    <interactant intactId="EBI-11039720">
        <id>P49336-2</id>
        <label>CDK8</label>
    </interactant>
    <organismsDiffer>false</organismsDiffer>
    <experiments>3</experiments>
</comment>
<comment type="interaction">
    <interactant intactId="EBI-356015">
        <id>Q14204</id>
    </interactant>
    <interactant intactId="EBI-351218">
        <id>Q9Y281</id>
        <label>CFL2</label>
    </interactant>
    <organismsDiffer>false</organismsDiffer>
    <experiments>3</experiments>
</comment>
<comment type="interaction">
    <interactant intactId="EBI-356015">
        <id>Q14204</id>
    </interactant>
    <interactant intactId="EBI-10260134">
        <id>Q86WV2</id>
        <label>COX4I1</label>
    </interactant>
    <organismsDiffer>false</organismsDiffer>
    <experiments>3</experiments>
</comment>
<comment type="interaction">
    <interactant intactId="EBI-356015">
        <id>Q14204</id>
    </interactant>
    <interactant intactId="EBI-1965681">
        <id>P26998</id>
        <label>CRYBB3</label>
    </interactant>
    <organismsDiffer>false</organismsDiffer>
    <experiments>3</experiments>
</comment>
<comment type="interaction">
    <interactant intactId="EBI-356015">
        <id>Q14204</id>
    </interactant>
    <interactant intactId="EBI-6189940">
        <id>P09668</id>
        <label>CTSH</label>
    </interactant>
    <organismsDiffer>false</organismsDiffer>
    <experiments>3</experiments>
</comment>
<comment type="interaction">
    <interactant intactId="EBI-356015">
        <id>Q14204</id>
    </interactant>
    <interactant intactId="EBI-3924013">
        <id>Q9BTE7</id>
        <label>DCUN1D5</label>
    </interactant>
    <organismsDiffer>false</organismsDiffer>
    <experiments>3</experiments>
</comment>
<comment type="interaction">
    <interactant intactId="EBI-356015">
        <id>Q14204</id>
    </interactant>
    <interactant intactId="EBI-529989">
        <id>Q9NRI5</id>
        <label>DISC1</label>
    </interactant>
    <organismsDiffer>false</organismsDiffer>
    <experiments>4</experiments>
</comment>
<comment type="interaction">
    <interactant intactId="EBI-356015">
        <id>Q14204</id>
    </interactant>
    <interactant intactId="EBI-3443946">
        <id>Q9Y6W6</id>
        <label>DUSP10</label>
    </interactant>
    <organismsDiffer>false</organismsDiffer>
    <experiments>3</experiments>
</comment>
<comment type="interaction">
    <interactant intactId="EBI-356015">
        <id>Q14204</id>
    </interactant>
    <interactant intactId="EBI-4401110">
        <id>Q13144</id>
        <label>EIF2B5</label>
    </interactant>
    <organismsDiffer>false</organismsDiffer>
    <experiments>3</experiments>
</comment>
<comment type="interaction">
    <interactant intactId="EBI-356015">
        <id>Q14204</id>
    </interactant>
    <interactant intactId="EBI-11337888">
        <id>Q7L5A8</id>
        <label>FA2H</label>
    </interactant>
    <organismsDiffer>false</organismsDiffer>
    <experiments>3</experiments>
</comment>
<comment type="interaction">
    <interactant intactId="EBI-356015">
        <id>Q14204</id>
    </interactant>
    <interactant intactId="EBI-448167">
        <id>P24522</id>
        <label>GADD45A</label>
    </interactant>
    <organismsDiffer>false</organismsDiffer>
    <experiments>3</experiments>
</comment>
<comment type="interaction">
    <interactant intactId="EBI-356015">
        <id>Q14204</id>
    </interactant>
    <interactant intactId="EBI-947774">
        <id>O75420</id>
        <label>GIGYF1</label>
    </interactant>
    <organismsDiffer>false</organismsDiffer>
    <experiments>2</experiments>
</comment>
<comment type="interaction">
    <interactant intactId="EBI-356015">
        <id>Q14204</id>
    </interactant>
    <interactant intactId="EBI-25844370">
        <id>B2RAF7</id>
        <label>hCG_1818547</label>
    </interactant>
    <organismsDiffer>false</organismsDiffer>
    <experiments>3</experiments>
</comment>
<comment type="interaction">
    <interactant intactId="EBI-356015">
        <id>Q14204</id>
    </interactant>
    <interactant intactId="EBI-466029">
        <id>P42858</id>
        <label>HTT</label>
    </interactant>
    <organismsDiffer>false</organismsDiffer>
    <experiments>8</experiments>
</comment>
<comment type="interaction">
    <interactant intactId="EBI-356015">
        <id>Q14204</id>
    </interactant>
    <interactant intactId="EBI-17178971">
        <id>Q14005-2</id>
        <label>IL16</label>
    </interactant>
    <organismsDiffer>false</organismsDiffer>
    <experiments>3</experiments>
</comment>
<comment type="interaction">
    <interactant intactId="EBI-356015">
        <id>Q14204</id>
    </interactant>
    <interactant intactId="EBI-9088829">
        <id>Q6DKI2</id>
        <label>LGALS9C</label>
    </interactant>
    <organismsDiffer>false</organismsDiffer>
    <experiments>3</experiments>
</comment>
<comment type="interaction">
    <interactant intactId="EBI-356015">
        <id>Q14204</id>
    </interactant>
    <interactant intactId="EBI-476263">
        <id>Q99683</id>
        <label>MAP3K5</label>
    </interactant>
    <organismsDiffer>false</organismsDiffer>
    <experiments>3</experiments>
</comment>
<comment type="interaction">
    <interactant intactId="EBI-356015">
        <id>Q14204</id>
    </interactant>
    <interactant intactId="EBI-298304">
        <id>Q15759</id>
        <label>MAPK11</label>
    </interactant>
    <organismsDiffer>false</organismsDiffer>
    <experiments>3</experiments>
</comment>
<comment type="interaction">
    <interactant intactId="EBI-356015">
        <id>Q14204</id>
    </interactant>
    <interactant intactId="EBI-10279647">
        <id>Q92886</id>
        <label>NEUROG1</label>
    </interactant>
    <organismsDiffer>false</organismsDiffer>
    <experiments>3</experiments>
</comment>
<comment type="interaction">
    <interactant intactId="EBI-356015">
        <id>Q14204</id>
    </interactant>
    <interactant intactId="EBI-25844111">
        <id>P20783-2</id>
        <label>NTF3</label>
    </interactant>
    <organismsDiffer>false</organismsDiffer>
    <experiments>3</experiments>
</comment>
<comment type="interaction">
    <interactant intactId="EBI-356015">
        <id>Q14204</id>
    </interactant>
    <interactant intactId="EBI-9087860">
        <id>P32243-2</id>
        <label>OTX2</label>
    </interactant>
    <organismsDiffer>false</organismsDiffer>
    <experiments>3</experiments>
</comment>
<comment type="interaction">
    <interactant intactId="EBI-356015">
        <id>Q14204</id>
    </interactant>
    <interactant intactId="EBI-9091052">
        <id>Q6P4D5-2</id>
        <label>PABIR3</label>
    </interactant>
    <organismsDiffer>false</organismsDiffer>
    <experiments>3</experiments>
</comment>
<comment type="interaction">
    <interactant intactId="EBI-356015">
        <id>Q14204</id>
    </interactant>
    <interactant intactId="EBI-395189">
        <id>P19388</id>
        <label>POLR2E</label>
    </interactant>
    <organismsDiffer>false</organismsDiffer>
    <experiments>3</experiments>
</comment>
<comment type="interaction">
    <interactant intactId="EBI-356015">
        <id>Q14204</id>
    </interactant>
    <interactant intactId="EBI-10700351">
        <id>O60237-2</id>
        <label>PPP1R12B</label>
    </interactant>
    <organismsDiffer>false</organismsDiffer>
    <experiments>3</experiments>
</comment>
<comment type="interaction">
    <interactant intactId="EBI-356015">
        <id>Q14204</id>
    </interactant>
    <interactant intactId="EBI-2860740">
        <id>Q96QH2</id>
        <label>PRAM1</label>
    </interactant>
    <organismsDiffer>false</organismsDiffer>
    <experiments>3</experiments>
</comment>
<comment type="interaction">
    <interactant intactId="EBI-356015">
        <id>Q14204</id>
    </interactant>
    <interactant intactId="EBI-2010251">
        <id>P49810</id>
        <label>PSEN2</label>
    </interactant>
    <organismsDiffer>false</organismsDiffer>
    <experiments>3</experiments>
</comment>
<comment type="interaction">
    <interactant intactId="EBI-356015">
        <id>Q14204</id>
    </interactant>
    <interactant intactId="EBI-12275482">
        <id>Q96DX8</id>
        <label>RTP4</label>
    </interactant>
    <organismsDiffer>false</organismsDiffer>
    <experiments>3</experiments>
</comment>
<comment type="interaction">
    <interactant intactId="EBI-356015">
        <id>Q14204</id>
    </interactant>
    <interactant intactId="EBI-712405">
        <id>P48443</id>
        <label>RXRG</label>
    </interactant>
    <organismsDiffer>false</organismsDiffer>
    <experiments>3</experiments>
</comment>
<comment type="interaction">
    <interactant intactId="EBI-356015">
        <id>Q14204</id>
    </interactant>
    <interactant intactId="EBI-25837959">
        <id>Q9BY12-3</id>
        <label>SCAPER</label>
    </interactant>
    <organismsDiffer>false</organismsDiffer>
    <experiments>3</experiments>
</comment>
<comment type="interaction">
    <interactant intactId="EBI-356015">
        <id>Q14204</id>
    </interactant>
    <interactant intactId="EBI-750105">
        <id>Q5T0L3</id>
        <label>SPATA46</label>
    </interactant>
    <organismsDiffer>false</organismsDiffer>
    <experiments>3</experiments>
</comment>
<comment type="interaction">
    <interactant intactId="EBI-356015">
        <id>Q14204</id>
    </interactant>
    <interactant intactId="EBI-11123832">
        <id>O60506-4</id>
        <label>SYNCRIP</label>
    </interactant>
    <organismsDiffer>false</organismsDiffer>
    <experiments>3</experiments>
</comment>
<comment type="interaction">
    <interactant intactId="EBI-356015">
        <id>Q14204</id>
    </interactant>
    <interactant intactId="EBI-954089">
        <id>O15273</id>
        <label>TCAP</label>
    </interactant>
    <organismsDiffer>false</organismsDiffer>
    <experiments>3</experiments>
</comment>
<comment type="interaction">
    <interactant intactId="EBI-356015">
        <id>Q14204</id>
    </interactant>
    <interactant intactId="EBI-12090309">
        <id>Q9BXU0</id>
        <label>TEX12</label>
    </interactant>
    <organismsDiffer>false</organismsDiffer>
    <experiments>3</experiments>
</comment>
<comment type="interaction">
    <interactant intactId="EBI-356015">
        <id>Q14204</id>
    </interactant>
    <interactant intactId="EBI-2372529">
        <id>O60830</id>
        <label>TIMM17B</label>
    </interactant>
    <organismsDiffer>false</organismsDiffer>
    <experiments>3</experiments>
</comment>
<comment type="interaction">
    <interactant intactId="EBI-356015">
        <id>Q14204</id>
    </interactant>
    <interactant intactId="EBI-25839648">
        <id>Q8IU80-2</id>
        <label>TMPRSS6</label>
    </interactant>
    <organismsDiffer>false</organismsDiffer>
    <experiments>3</experiments>
</comment>
<comment type="interaction">
    <interactant intactId="EBI-356015">
        <id>Q14204</id>
    </interactant>
    <interactant intactId="EBI-9089156">
        <id>Q8IUR5-4</id>
        <label>TMTC1</label>
    </interactant>
    <organismsDiffer>false</organismsDiffer>
    <experiments>3</experiments>
</comment>
<comment type="interaction">
    <interactant intactId="EBI-356015">
        <id>Q14204</id>
    </interactant>
    <interactant intactId="EBI-10316321">
        <id>Q9NX94</id>
        <label>WBP1L</label>
    </interactant>
    <organismsDiffer>false</organismsDiffer>
    <experiments>3</experiments>
</comment>
<comment type="interaction">
    <interactant intactId="EBI-356015">
        <id>Q14204</id>
    </interactant>
    <interactant intactId="EBI-540834">
        <id>P61964</id>
        <label>WDR5</label>
    </interactant>
    <organismsDiffer>false</organismsDiffer>
    <experiments>3</experiments>
</comment>
<comment type="interaction">
    <interactant intactId="EBI-356015">
        <id>Q14204</id>
    </interactant>
    <interactant intactId="EBI-743923">
        <id>O00308</id>
        <label>WWP2</label>
    </interactant>
    <organismsDiffer>false</organismsDiffer>
    <experiments>3</experiments>
</comment>
<comment type="interaction">
    <interactant intactId="EBI-356015">
        <id>Q14204</id>
    </interactant>
    <interactant intactId="EBI-347088">
        <id>P63104</id>
        <label>YWHAZ</label>
    </interactant>
    <organismsDiffer>false</organismsDiffer>
    <experiments>2</experiments>
</comment>
<comment type="interaction">
    <interactant intactId="EBI-356015">
        <id>Q14204</id>
    </interactant>
    <interactant intactId="EBI-25830993">
        <id>Q96EF9</id>
        <label>ZHX1-C8orf76</label>
    </interactant>
    <organismsDiffer>false</organismsDiffer>
    <experiments>3</experiments>
</comment>
<comment type="interaction">
    <interactant intactId="EBI-356015">
        <id>Q14204</id>
    </interactant>
    <interactant intactId="EBI-750454">
        <id>Q96EJ4</id>
    </interactant>
    <organismsDiffer>false</organismsDiffer>
    <experiments>3</experiments>
</comment>
<comment type="subcellular location">
    <subcellularLocation>
        <location evidence="25">Cytoplasm</location>
        <location evidence="25">Cytoskeleton</location>
    </subcellularLocation>
</comment>
<comment type="domain">
    <text>Dynein heavy chains probably consist of an N-terminal stem (which binds cargo and interacts with other dynein components), and the head or motor domain. The motor contains six tandemly-linked AAA domains in the head, which form a ring. A stalk-like structure (formed by two of the coiled coil domains) protrudes between AAA 4 and AAA 5 and terminates in a microtubule-binding site. A seventh domain may also contribute to this ring; it is not clear whether the N-terminus or the C-terminus forms this extra domain. There are four well-conserved and two non-conserved ATPase sites, one per AAA domain. Probably only one of these (within AAA 1) actually hydrolyzes ATP, the others may serve a regulatory function.</text>
</comment>
<comment type="disease" evidence="7 13 15">
    <disease id="DI-03264">
        <name>Charcot-Marie-Tooth disease, axonal, type 2O</name>
        <acronym>CMT2O</acronym>
        <description>An axonal form of Charcot-Marie-Tooth disease, a disorder of the peripheral nervous system, characterized by progressive weakness and atrophy, initially of the peroneal muscles and later of the distal muscles of the arms. Charcot-Marie-Tooth disease is classified in two main groups on the basis of electrophysiologic properties and histopathology: primary peripheral demyelinating neuropathies (designated CMT1 when they are dominantly inherited) and primary peripheral axonal neuropathies (CMT2). Neuropathies of the CMT2 group are characterized by signs of axonal degeneration in the absence of obvious myelin alterations, normal or slightly reduced nerve conduction velocities, and progressive distal muscle weakness and atrophy.</description>
        <dbReference type="MIM" id="614228"/>
    </disease>
    <text>The disease is caused by variants affecting the gene represented in this entry.</text>
</comment>
<comment type="disease" evidence="6 8 11 12 18">
    <disease id="DI-03425">
        <name>Cortical dysplasia, complex, with other brain malformations 13</name>
        <acronym>CDCBM13</acronym>
        <description>An autosomal dominant disorder characterized by global developmental delay with impaired intellectual development. Some patients show signs of peripheral neuropathy, such as abnormal gait and hyporeflexia. CDCBM13 is associated with variable neuronal migration defects resulting in cortical malformations.</description>
        <dbReference type="MIM" id="614563"/>
    </disease>
    <text>The disease is caused by variants affecting the gene represented in this entry.</text>
</comment>
<comment type="disease" evidence="9 10 14 15 16 18">
    <disease id="DI-03433">
        <name>Spinal muscular atrophy, lower extremity-predominant 1, autosomal dominant</name>
        <acronym>SMALED1</acronym>
        <description>A form of spinal muscular atrophy, a neuromuscular disorder characterized by degeneration of the anterior horn cells of the spinal cord, leading to symmetrical muscle weakness and atrophy. SMALED1 is characterized by muscle weakness predominantly affecting the proximal lower extremities.</description>
        <dbReference type="MIM" id="158600"/>
    </disease>
    <text>The disease is caused by variants affecting the gene represented in this entry.</text>
</comment>
<comment type="similarity">
    <text evidence="24">Belongs to the dynein heavy chain family.</text>
</comment>
<comment type="sequence caution" evidence="24">
    <conflict type="erroneous initiation">
        <sequence resource="EMBL-CDS" id="BAA20783"/>
    </conflict>
    <text>Extended N-terminus.</text>
</comment>